<dbReference type="EC" id="7.1.1.2" evidence="10"/>
<dbReference type="EMBL" id="V00662">
    <property type="protein sequence ID" value="CAA24026.1"/>
    <property type="molecule type" value="Genomic_DNA"/>
</dbReference>
<dbReference type="EMBL" id="J01415">
    <property type="protein sequence ID" value="AAB58943.1"/>
    <property type="molecule type" value="Genomic_DNA"/>
</dbReference>
<dbReference type="EMBL" id="D38112">
    <property type="protein sequence ID" value="BAA07290.1"/>
    <property type="molecule type" value="Genomic_DNA"/>
</dbReference>
<dbReference type="EMBL" id="AY339402">
    <property type="protein sequence ID" value="AAP89036.1"/>
    <property type="molecule type" value="Genomic_DNA"/>
</dbReference>
<dbReference type="EMBL" id="AY339403">
    <property type="protein sequence ID" value="AAP89049.1"/>
    <property type="molecule type" value="Genomic_DNA"/>
</dbReference>
<dbReference type="EMBL" id="AY339404">
    <property type="protein sequence ID" value="AAP89062.1"/>
    <property type="molecule type" value="Genomic_DNA"/>
</dbReference>
<dbReference type="EMBL" id="AY339405">
    <property type="protein sequence ID" value="AAP89075.1"/>
    <property type="molecule type" value="Genomic_DNA"/>
</dbReference>
<dbReference type="EMBL" id="AY339406">
    <property type="protein sequence ID" value="AAP89088.1"/>
    <property type="molecule type" value="Genomic_DNA"/>
</dbReference>
<dbReference type="EMBL" id="AY339407">
    <property type="protein sequence ID" value="AAP89101.1"/>
    <property type="molecule type" value="Genomic_DNA"/>
</dbReference>
<dbReference type="EMBL" id="AY339408">
    <property type="protein sequence ID" value="AAP89114.1"/>
    <property type="molecule type" value="Genomic_DNA"/>
</dbReference>
<dbReference type="EMBL" id="AY339409">
    <property type="protein sequence ID" value="AAP89127.1"/>
    <property type="molecule type" value="Genomic_DNA"/>
</dbReference>
<dbReference type="EMBL" id="AY339410">
    <property type="protein sequence ID" value="AAP89140.1"/>
    <property type="molecule type" value="Genomic_DNA"/>
</dbReference>
<dbReference type="EMBL" id="AY339411">
    <property type="protein sequence ID" value="AAP89153.1"/>
    <property type="molecule type" value="Genomic_DNA"/>
</dbReference>
<dbReference type="EMBL" id="AY339412">
    <property type="protein sequence ID" value="AAP89166.1"/>
    <property type="molecule type" value="Genomic_DNA"/>
</dbReference>
<dbReference type="EMBL" id="AY339413">
    <property type="protein sequence ID" value="AAP89179.1"/>
    <property type="molecule type" value="Genomic_DNA"/>
</dbReference>
<dbReference type="EMBL" id="AY339414">
    <property type="protein sequence ID" value="AAP89192.1"/>
    <property type="molecule type" value="Genomic_DNA"/>
</dbReference>
<dbReference type="EMBL" id="AY339415">
    <property type="protein sequence ID" value="AAP89205.1"/>
    <property type="molecule type" value="Genomic_DNA"/>
</dbReference>
<dbReference type="EMBL" id="AY339416">
    <property type="protein sequence ID" value="AAP89218.1"/>
    <property type="molecule type" value="Genomic_DNA"/>
</dbReference>
<dbReference type="EMBL" id="AY339417">
    <property type="protein sequence ID" value="AAP89231.1"/>
    <property type="molecule type" value="Genomic_DNA"/>
</dbReference>
<dbReference type="EMBL" id="AY339418">
    <property type="protein sequence ID" value="AAP89244.1"/>
    <property type="molecule type" value="Genomic_DNA"/>
</dbReference>
<dbReference type="EMBL" id="AY339419">
    <property type="protein sequence ID" value="AAP89257.1"/>
    <property type="molecule type" value="Genomic_DNA"/>
</dbReference>
<dbReference type="EMBL" id="AY339420">
    <property type="protein sequence ID" value="AAP89270.1"/>
    <property type="molecule type" value="Genomic_DNA"/>
</dbReference>
<dbReference type="EMBL" id="AY339421">
    <property type="protein sequence ID" value="AAP89283.1"/>
    <property type="molecule type" value="Genomic_DNA"/>
</dbReference>
<dbReference type="EMBL" id="AY339422">
    <property type="protein sequence ID" value="AAP89296.1"/>
    <property type="molecule type" value="Genomic_DNA"/>
</dbReference>
<dbReference type="EMBL" id="AY339423">
    <property type="protein sequence ID" value="AAP89309.1"/>
    <property type="molecule type" value="Genomic_DNA"/>
</dbReference>
<dbReference type="EMBL" id="AY339424">
    <property type="protein sequence ID" value="AAP89322.1"/>
    <property type="molecule type" value="Genomic_DNA"/>
</dbReference>
<dbReference type="EMBL" id="AY339425">
    <property type="protein sequence ID" value="AAP89335.1"/>
    <property type="molecule type" value="Genomic_DNA"/>
</dbReference>
<dbReference type="EMBL" id="AY339426">
    <property type="protein sequence ID" value="AAP89348.1"/>
    <property type="molecule type" value="Genomic_DNA"/>
</dbReference>
<dbReference type="EMBL" id="AY339427">
    <property type="protein sequence ID" value="AAP89361.1"/>
    <property type="molecule type" value="Genomic_DNA"/>
</dbReference>
<dbReference type="EMBL" id="AY339428">
    <property type="protein sequence ID" value="AAP89374.1"/>
    <property type="molecule type" value="Genomic_DNA"/>
</dbReference>
<dbReference type="EMBL" id="AY339429">
    <property type="protein sequence ID" value="AAP89387.1"/>
    <property type="molecule type" value="Genomic_DNA"/>
</dbReference>
<dbReference type="EMBL" id="AY339430">
    <property type="protein sequence ID" value="AAP89400.1"/>
    <property type="molecule type" value="Genomic_DNA"/>
</dbReference>
<dbReference type="EMBL" id="AY339431">
    <property type="protein sequence ID" value="AAP89413.1"/>
    <property type="molecule type" value="Genomic_DNA"/>
</dbReference>
<dbReference type="EMBL" id="AY339432">
    <property type="protein sequence ID" value="AAP89426.1"/>
    <property type="molecule type" value="Genomic_DNA"/>
</dbReference>
<dbReference type="EMBL" id="AY339433">
    <property type="protein sequence ID" value="AAP89439.1"/>
    <property type="molecule type" value="Genomic_DNA"/>
</dbReference>
<dbReference type="EMBL" id="AY339434">
    <property type="protein sequence ID" value="AAP89452.1"/>
    <property type="molecule type" value="Genomic_DNA"/>
</dbReference>
<dbReference type="EMBL" id="AY339435">
    <property type="protein sequence ID" value="AAP89465.1"/>
    <property type="molecule type" value="Genomic_DNA"/>
</dbReference>
<dbReference type="EMBL" id="AY339436">
    <property type="protein sequence ID" value="AAP89478.1"/>
    <property type="molecule type" value="Genomic_DNA"/>
</dbReference>
<dbReference type="EMBL" id="AY339437">
    <property type="protein sequence ID" value="AAP89491.1"/>
    <property type="molecule type" value="Genomic_DNA"/>
</dbReference>
<dbReference type="EMBL" id="AY339438">
    <property type="protein sequence ID" value="AAP89504.1"/>
    <property type="molecule type" value="Genomic_DNA"/>
</dbReference>
<dbReference type="EMBL" id="AY339439">
    <property type="protein sequence ID" value="AAP89517.1"/>
    <property type="molecule type" value="Genomic_DNA"/>
</dbReference>
<dbReference type="EMBL" id="AY339440">
    <property type="protein sequence ID" value="AAP89530.1"/>
    <property type="molecule type" value="Genomic_DNA"/>
</dbReference>
<dbReference type="EMBL" id="AY339441">
    <property type="protein sequence ID" value="AAP89543.1"/>
    <property type="molecule type" value="Genomic_DNA"/>
</dbReference>
<dbReference type="EMBL" id="AY339442">
    <property type="protein sequence ID" value="AAP89556.1"/>
    <property type="molecule type" value="Genomic_DNA"/>
</dbReference>
<dbReference type="EMBL" id="AY339443">
    <property type="protein sequence ID" value="AAP89569.1"/>
    <property type="molecule type" value="Genomic_DNA"/>
</dbReference>
<dbReference type="EMBL" id="AY339444">
    <property type="protein sequence ID" value="AAP89582.1"/>
    <property type="molecule type" value="Genomic_DNA"/>
</dbReference>
<dbReference type="EMBL" id="AY339445">
    <property type="protein sequence ID" value="AAP89595.1"/>
    <property type="molecule type" value="Genomic_DNA"/>
</dbReference>
<dbReference type="EMBL" id="AY339446">
    <property type="protein sequence ID" value="AAP89608.1"/>
    <property type="molecule type" value="Genomic_DNA"/>
</dbReference>
<dbReference type="EMBL" id="AY339447">
    <property type="protein sequence ID" value="AAP89621.1"/>
    <property type="molecule type" value="Genomic_DNA"/>
</dbReference>
<dbReference type="EMBL" id="AY339448">
    <property type="protein sequence ID" value="AAP89634.1"/>
    <property type="molecule type" value="Genomic_DNA"/>
</dbReference>
<dbReference type="EMBL" id="AY339449">
    <property type="protein sequence ID" value="AAP89647.1"/>
    <property type="molecule type" value="Genomic_DNA"/>
</dbReference>
<dbReference type="EMBL" id="AY339450">
    <property type="protein sequence ID" value="AAP89660.1"/>
    <property type="molecule type" value="Genomic_DNA"/>
</dbReference>
<dbReference type="EMBL" id="AY339451">
    <property type="protein sequence ID" value="AAP89673.1"/>
    <property type="molecule type" value="Genomic_DNA"/>
</dbReference>
<dbReference type="EMBL" id="AY339452">
    <property type="protein sequence ID" value="AAP89686.1"/>
    <property type="molecule type" value="Genomic_DNA"/>
</dbReference>
<dbReference type="EMBL" id="AY339453">
    <property type="protein sequence ID" value="AAP89699.1"/>
    <property type="molecule type" value="Genomic_DNA"/>
</dbReference>
<dbReference type="EMBL" id="AY339454">
    <property type="protein sequence ID" value="AAP89712.1"/>
    <property type="molecule type" value="Genomic_DNA"/>
</dbReference>
<dbReference type="EMBL" id="AY339455">
    <property type="protein sequence ID" value="AAP89725.1"/>
    <property type="molecule type" value="Genomic_DNA"/>
</dbReference>
<dbReference type="EMBL" id="AY339456">
    <property type="protein sequence ID" value="AAP89738.1"/>
    <property type="molecule type" value="Genomic_DNA"/>
</dbReference>
<dbReference type="EMBL" id="AY339457">
    <property type="protein sequence ID" value="AAP89751.1"/>
    <property type="molecule type" value="Genomic_DNA"/>
</dbReference>
<dbReference type="EMBL" id="AY339458">
    <property type="protein sequence ID" value="AAP89764.1"/>
    <property type="molecule type" value="Genomic_DNA"/>
</dbReference>
<dbReference type="EMBL" id="AY339459">
    <property type="protein sequence ID" value="AAP89777.1"/>
    <property type="molecule type" value="Genomic_DNA"/>
</dbReference>
<dbReference type="EMBL" id="AY339498">
    <property type="protein sequence ID" value="AAP90284.1"/>
    <property type="molecule type" value="Genomic_DNA"/>
</dbReference>
<dbReference type="EMBL" id="AY339499">
    <property type="protein sequence ID" value="AAP90297.1"/>
    <property type="molecule type" value="Genomic_DNA"/>
</dbReference>
<dbReference type="EMBL" id="AY339500">
    <property type="protein sequence ID" value="AAP90310.1"/>
    <property type="molecule type" value="Genomic_DNA"/>
</dbReference>
<dbReference type="EMBL" id="AY339501">
    <property type="protein sequence ID" value="AAP90323.1"/>
    <property type="molecule type" value="Genomic_DNA"/>
</dbReference>
<dbReference type="EMBL" id="AY339502">
    <property type="protein sequence ID" value="AAP90336.1"/>
    <property type="molecule type" value="Genomic_DNA"/>
</dbReference>
<dbReference type="EMBL" id="AY339503">
    <property type="protein sequence ID" value="AAP90349.1"/>
    <property type="molecule type" value="Genomic_DNA"/>
</dbReference>
<dbReference type="EMBL" id="AY339504">
    <property type="protein sequence ID" value="AAP90362.1"/>
    <property type="molecule type" value="Genomic_DNA"/>
</dbReference>
<dbReference type="EMBL" id="AY339505">
    <property type="protein sequence ID" value="AAP90375.1"/>
    <property type="molecule type" value="Genomic_DNA"/>
</dbReference>
<dbReference type="EMBL" id="AY339506">
    <property type="protein sequence ID" value="AAP90388.1"/>
    <property type="molecule type" value="Genomic_DNA"/>
</dbReference>
<dbReference type="EMBL" id="AY339507">
    <property type="protein sequence ID" value="AAP90401.1"/>
    <property type="molecule type" value="Genomic_DNA"/>
</dbReference>
<dbReference type="EMBL" id="AY339508">
    <property type="protein sequence ID" value="AAP90414.1"/>
    <property type="molecule type" value="Genomic_DNA"/>
</dbReference>
<dbReference type="EMBL" id="AY339509">
    <property type="protein sequence ID" value="AAP90427.1"/>
    <property type="molecule type" value="Genomic_DNA"/>
</dbReference>
<dbReference type="EMBL" id="AY339510">
    <property type="protein sequence ID" value="AAP90440.1"/>
    <property type="molecule type" value="Genomic_DNA"/>
</dbReference>
<dbReference type="EMBL" id="AY339511">
    <property type="protein sequence ID" value="AAP90453.1"/>
    <property type="molecule type" value="Genomic_DNA"/>
</dbReference>
<dbReference type="EMBL" id="AY339512">
    <property type="protein sequence ID" value="AAP90466.1"/>
    <property type="molecule type" value="Genomic_DNA"/>
</dbReference>
<dbReference type="EMBL" id="AY339513">
    <property type="protein sequence ID" value="AAP90479.1"/>
    <property type="molecule type" value="Genomic_DNA"/>
</dbReference>
<dbReference type="EMBL" id="AY339514">
    <property type="protein sequence ID" value="AAP90492.1"/>
    <property type="molecule type" value="Genomic_DNA"/>
</dbReference>
<dbReference type="EMBL" id="AY339515">
    <property type="protein sequence ID" value="AAP90505.1"/>
    <property type="molecule type" value="Genomic_DNA"/>
</dbReference>
<dbReference type="EMBL" id="AY339516">
    <property type="protein sequence ID" value="AAP90518.1"/>
    <property type="molecule type" value="Genomic_DNA"/>
</dbReference>
<dbReference type="EMBL" id="AY339517">
    <property type="protein sequence ID" value="AAP90531.1"/>
    <property type="molecule type" value="Genomic_DNA"/>
</dbReference>
<dbReference type="EMBL" id="AY339518">
    <property type="protein sequence ID" value="AAP90544.1"/>
    <property type="molecule type" value="Genomic_DNA"/>
</dbReference>
<dbReference type="EMBL" id="AY339519">
    <property type="protein sequence ID" value="AAP90557.1"/>
    <property type="molecule type" value="Genomic_DNA"/>
</dbReference>
<dbReference type="EMBL" id="AY339520">
    <property type="protein sequence ID" value="AAP90570.1"/>
    <property type="molecule type" value="Genomic_DNA"/>
</dbReference>
<dbReference type="EMBL" id="AY339521">
    <property type="protein sequence ID" value="AAP90583.1"/>
    <property type="molecule type" value="Genomic_DNA"/>
</dbReference>
<dbReference type="EMBL" id="AY339522">
    <property type="protein sequence ID" value="AAP90596.1"/>
    <property type="molecule type" value="Genomic_DNA"/>
</dbReference>
<dbReference type="EMBL" id="AY339523">
    <property type="protein sequence ID" value="AAP90609.1"/>
    <property type="molecule type" value="Genomic_DNA"/>
</dbReference>
<dbReference type="EMBL" id="AY339524">
    <property type="protein sequence ID" value="AAP90622.1"/>
    <property type="molecule type" value="Genomic_DNA"/>
</dbReference>
<dbReference type="EMBL" id="AY339525">
    <property type="protein sequence ID" value="AAP90635.1"/>
    <property type="molecule type" value="Genomic_DNA"/>
</dbReference>
<dbReference type="EMBL" id="AY339526">
    <property type="protein sequence ID" value="AAP90648.1"/>
    <property type="molecule type" value="Genomic_DNA"/>
</dbReference>
<dbReference type="EMBL" id="AY339527">
    <property type="protein sequence ID" value="AAP90661.1"/>
    <property type="molecule type" value="Genomic_DNA"/>
</dbReference>
<dbReference type="EMBL" id="AY339528">
    <property type="protein sequence ID" value="AAP90674.1"/>
    <property type="molecule type" value="Genomic_DNA"/>
</dbReference>
<dbReference type="EMBL" id="AY339529">
    <property type="protein sequence ID" value="AAP90687.1"/>
    <property type="molecule type" value="Genomic_DNA"/>
</dbReference>
<dbReference type="EMBL" id="AY339530">
    <property type="protein sequence ID" value="AAP90700.1"/>
    <property type="molecule type" value="Genomic_DNA"/>
</dbReference>
<dbReference type="EMBL" id="AY339531">
    <property type="protein sequence ID" value="AAP90713.1"/>
    <property type="molecule type" value="Genomic_DNA"/>
</dbReference>
<dbReference type="EMBL" id="AY339532">
    <property type="protein sequence ID" value="AAP90726.1"/>
    <property type="molecule type" value="Genomic_DNA"/>
</dbReference>
<dbReference type="EMBL" id="AY339533">
    <property type="protein sequence ID" value="AAP90739.1"/>
    <property type="molecule type" value="Genomic_DNA"/>
</dbReference>
<dbReference type="EMBL" id="AY339534">
    <property type="protein sequence ID" value="AAP90752.1"/>
    <property type="molecule type" value="Genomic_DNA"/>
</dbReference>
<dbReference type="EMBL" id="AY339535">
    <property type="protein sequence ID" value="AAP90765.1"/>
    <property type="molecule type" value="Genomic_DNA"/>
</dbReference>
<dbReference type="EMBL" id="AY339536">
    <property type="protein sequence ID" value="AAP90778.1"/>
    <property type="molecule type" value="Genomic_DNA"/>
</dbReference>
<dbReference type="EMBL" id="AY339537">
    <property type="protein sequence ID" value="AAP90791.1"/>
    <property type="molecule type" value="Genomic_DNA"/>
</dbReference>
<dbReference type="EMBL" id="AY339538">
    <property type="protein sequence ID" value="AAP90804.1"/>
    <property type="molecule type" value="Genomic_DNA"/>
</dbReference>
<dbReference type="EMBL" id="AY339539">
    <property type="protein sequence ID" value="AAP90817.1"/>
    <property type="molecule type" value="Genomic_DNA"/>
</dbReference>
<dbReference type="EMBL" id="AY339540">
    <property type="protein sequence ID" value="AAP90830.1"/>
    <property type="molecule type" value="Genomic_DNA"/>
</dbReference>
<dbReference type="EMBL" id="AY339541">
    <property type="protein sequence ID" value="AAP90843.1"/>
    <property type="molecule type" value="Genomic_DNA"/>
</dbReference>
<dbReference type="EMBL" id="AY339542">
    <property type="protein sequence ID" value="AAP90856.1"/>
    <property type="molecule type" value="Genomic_DNA"/>
</dbReference>
<dbReference type="EMBL" id="AY339543">
    <property type="protein sequence ID" value="AAP90869.1"/>
    <property type="molecule type" value="Genomic_DNA"/>
</dbReference>
<dbReference type="EMBL" id="AY339544">
    <property type="protein sequence ID" value="AAP90882.1"/>
    <property type="molecule type" value="Genomic_DNA"/>
</dbReference>
<dbReference type="EMBL" id="AY339546">
    <property type="protein sequence ID" value="AAP90908.1"/>
    <property type="molecule type" value="Genomic_DNA"/>
</dbReference>
<dbReference type="EMBL" id="AY339547">
    <property type="protein sequence ID" value="AAP90921.1"/>
    <property type="molecule type" value="Genomic_DNA"/>
</dbReference>
<dbReference type="EMBL" id="AY339548">
    <property type="protein sequence ID" value="AAP90934.1"/>
    <property type="molecule type" value="Genomic_DNA"/>
</dbReference>
<dbReference type="EMBL" id="AY339549">
    <property type="protein sequence ID" value="AAP90947.1"/>
    <property type="molecule type" value="Genomic_DNA"/>
</dbReference>
<dbReference type="EMBL" id="AY339550">
    <property type="protein sequence ID" value="AAP90960.1"/>
    <property type="molecule type" value="Genomic_DNA"/>
</dbReference>
<dbReference type="EMBL" id="AY339551">
    <property type="protein sequence ID" value="AAP90973.1"/>
    <property type="molecule type" value="Genomic_DNA"/>
</dbReference>
<dbReference type="EMBL" id="AY339552">
    <property type="protein sequence ID" value="AAP90986.1"/>
    <property type="molecule type" value="Genomic_DNA"/>
</dbReference>
<dbReference type="EMBL" id="AY339553">
    <property type="protein sequence ID" value="AAP90999.1"/>
    <property type="molecule type" value="Genomic_DNA"/>
</dbReference>
<dbReference type="EMBL" id="AY339554">
    <property type="protein sequence ID" value="AAP91012.1"/>
    <property type="molecule type" value="Genomic_DNA"/>
</dbReference>
<dbReference type="EMBL" id="AY339555">
    <property type="protein sequence ID" value="AAP91025.1"/>
    <property type="molecule type" value="Genomic_DNA"/>
</dbReference>
<dbReference type="EMBL" id="AY339556">
    <property type="protein sequence ID" value="AAP91038.1"/>
    <property type="molecule type" value="Genomic_DNA"/>
</dbReference>
<dbReference type="EMBL" id="AY339557">
    <property type="protein sequence ID" value="AAP91051.1"/>
    <property type="molecule type" value="Genomic_DNA"/>
</dbReference>
<dbReference type="EMBL" id="AY339558">
    <property type="protein sequence ID" value="AAP91064.1"/>
    <property type="molecule type" value="Genomic_DNA"/>
</dbReference>
<dbReference type="EMBL" id="AY339559">
    <property type="protein sequence ID" value="AAP91077.1"/>
    <property type="molecule type" value="Genomic_DNA"/>
</dbReference>
<dbReference type="EMBL" id="AY339560">
    <property type="protein sequence ID" value="AAP91090.1"/>
    <property type="molecule type" value="Genomic_DNA"/>
</dbReference>
<dbReference type="EMBL" id="AY339561">
    <property type="protein sequence ID" value="AAP91103.1"/>
    <property type="molecule type" value="Genomic_DNA"/>
</dbReference>
<dbReference type="EMBL" id="AY339562">
    <property type="protein sequence ID" value="AAP91116.1"/>
    <property type="molecule type" value="Genomic_DNA"/>
</dbReference>
<dbReference type="EMBL" id="AY339563">
    <property type="protein sequence ID" value="AAP91129.1"/>
    <property type="molecule type" value="Genomic_DNA"/>
</dbReference>
<dbReference type="EMBL" id="AY339564">
    <property type="protein sequence ID" value="AAP91142.1"/>
    <property type="molecule type" value="Genomic_DNA"/>
</dbReference>
<dbReference type="EMBL" id="AY339565">
    <property type="protein sequence ID" value="AAP91155.1"/>
    <property type="molecule type" value="Genomic_DNA"/>
</dbReference>
<dbReference type="EMBL" id="AF346963">
    <property type="protein sequence ID" value="AAK17207.1"/>
    <property type="molecule type" value="Genomic_DNA"/>
</dbReference>
<dbReference type="EMBL" id="AF346964">
    <property type="protein sequence ID" value="AAK17220.1"/>
    <property type="molecule type" value="Genomic_DNA"/>
</dbReference>
<dbReference type="EMBL" id="AF346965">
    <property type="protein sequence ID" value="AAK17233.1"/>
    <property type="molecule type" value="Genomic_DNA"/>
</dbReference>
<dbReference type="EMBL" id="AF346966">
    <property type="protein sequence ID" value="AAK17246.1"/>
    <property type="molecule type" value="Genomic_DNA"/>
</dbReference>
<dbReference type="EMBL" id="AF346967">
    <property type="protein sequence ID" value="AAK17259.1"/>
    <property type="molecule type" value="Genomic_DNA"/>
</dbReference>
<dbReference type="EMBL" id="AF346970">
    <property type="protein sequence ID" value="AAK17298.1"/>
    <property type="molecule type" value="Genomic_DNA"/>
</dbReference>
<dbReference type="EMBL" id="AF346971">
    <property type="protein sequence ID" value="AAK17311.1"/>
    <property type="molecule type" value="Genomic_DNA"/>
</dbReference>
<dbReference type="EMBL" id="AF346974">
    <property type="protein sequence ID" value="AAK17350.1"/>
    <property type="molecule type" value="Genomic_DNA"/>
</dbReference>
<dbReference type="EMBL" id="AF346975">
    <property type="protein sequence ID" value="AAK17363.1"/>
    <property type="molecule type" value="Genomic_DNA"/>
</dbReference>
<dbReference type="EMBL" id="AF346976">
    <property type="protein sequence ID" value="AAK17376.1"/>
    <property type="molecule type" value="Genomic_DNA"/>
</dbReference>
<dbReference type="EMBL" id="AF346977">
    <property type="protein sequence ID" value="AAK17389.1"/>
    <property type="molecule type" value="Genomic_DNA"/>
</dbReference>
<dbReference type="EMBL" id="AF346978">
    <property type="protein sequence ID" value="AAK17402.1"/>
    <property type="molecule type" value="Genomic_DNA"/>
</dbReference>
<dbReference type="EMBL" id="AF346979">
    <property type="protein sequence ID" value="AAK17415.1"/>
    <property type="molecule type" value="Genomic_DNA"/>
</dbReference>
<dbReference type="EMBL" id="AF346980">
    <property type="protein sequence ID" value="AAK17428.1"/>
    <property type="molecule type" value="Genomic_DNA"/>
</dbReference>
<dbReference type="EMBL" id="AF346981">
    <property type="protein sequence ID" value="AAK17441.1"/>
    <property type="molecule type" value="Genomic_DNA"/>
</dbReference>
<dbReference type="EMBL" id="AF346984">
    <property type="protein sequence ID" value="AAK17480.1"/>
    <property type="molecule type" value="Genomic_DNA"/>
</dbReference>
<dbReference type="EMBL" id="AF346988">
    <property type="protein sequence ID" value="AAK17532.1"/>
    <property type="molecule type" value="Genomic_DNA"/>
</dbReference>
<dbReference type="EMBL" id="AF346989">
    <property type="protein sequence ID" value="AAK17545.1"/>
    <property type="molecule type" value="Genomic_DNA"/>
</dbReference>
<dbReference type="EMBL" id="AF346990">
    <property type="protein sequence ID" value="AAK17558.1"/>
    <property type="molecule type" value="Genomic_DNA"/>
</dbReference>
<dbReference type="EMBL" id="AF346991">
    <property type="protein sequence ID" value="AAK17571.1"/>
    <property type="molecule type" value="Genomic_DNA"/>
</dbReference>
<dbReference type="EMBL" id="AF346992">
    <property type="protein sequence ID" value="AAK17584.1"/>
    <property type="molecule type" value="Genomic_DNA"/>
</dbReference>
<dbReference type="EMBL" id="AF346993">
    <property type="protein sequence ID" value="AAK17597.1"/>
    <property type="molecule type" value="Genomic_DNA"/>
</dbReference>
<dbReference type="EMBL" id="AF346994">
    <property type="protein sequence ID" value="AAK17610.1"/>
    <property type="molecule type" value="Genomic_DNA"/>
</dbReference>
<dbReference type="EMBL" id="AF346995">
    <property type="protein sequence ID" value="AAK17623.1"/>
    <property type="molecule type" value="Genomic_DNA"/>
</dbReference>
<dbReference type="EMBL" id="AF346998">
    <property type="protein sequence ID" value="AAK17662.1"/>
    <property type="molecule type" value="Genomic_DNA"/>
</dbReference>
<dbReference type="EMBL" id="AF346999">
    <property type="protein sequence ID" value="AAK17675.1"/>
    <property type="molecule type" value="Genomic_DNA"/>
</dbReference>
<dbReference type="EMBL" id="AF347000">
    <property type="protein sequence ID" value="AAK17688.1"/>
    <property type="molecule type" value="Genomic_DNA"/>
</dbReference>
<dbReference type="EMBL" id="AF347002">
    <property type="protein sequence ID" value="AAK17714.1"/>
    <property type="molecule type" value="Genomic_DNA"/>
</dbReference>
<dbReference type="EMBL" id="AF347003">
    <property type="protein sequence ID" value="AAK17727.1"/>
    <property type="molecule type" value="Genomic_DNA"/>
</dbReference>
<dbReference type="EMBL" id="AF347004">
    <property type="protein sequence ID" value="AAK17740.1"/>
    <property type="molecule type" value="Genomic_DNA"/>
</dbReference>
<dbReference type="EMBL" id="AF347005">
    <property type="protein sequence ID" value="AAK17753.1"/>
    <property type="molecule type" value="Genomic_DNA"/>
</dbReference>
<dbReference type="EMBL" id="AF347006">
    <property type="protein sequence ID" value="AAK17766.1"/>
    <property type="molecule type" value="Genomic_DNA"/>
</dbReference>
<dbReference type="EMBL" id="AF347007">
    <property type="protein sequence ID" value="AAK17779.1"/>
    <property type="molecule type" value="Genomic_DNA"/>
</dbReference>
<dbReference type="EMBL" id="AF347008">
    <property type="protein sequence ID" value="AAK17792.1"/>
    <property type="molecule type" value="Genomic_DNA"/>
</dbReference>
<dbReference type="EMBL" id="AF347009">
    <property type="protein sequence ID" value="AAK17805.1"/>
    <property type="molecule type" value="Genomic_DNA"/>
</dbReference>
<dbReference type="EMBL" id="AF347011">
    <property type="protein sequence ID" value="AAK17831.1"/>
    <property type="molecule type" value="Genomic_DNA"/>
</dbReference>
<dbReference type="EMBL" id="AF347012">
    <property type="protein sequence ID" value="AAK17844.1"/>
    <property type="molecule type" value="Genomic_DNA"/>
</dbReference>
<dbReference type="EMBL" id="AF347013">
    <property type="protein sequence ID" value="AAK17857.1"/>
    <property type="molecule type" value="Genomic_DNA"/>
</dbReference>
<dbReference type="EMBL" id="AF347015">
    <property type="protein sequence ID" value="AAK17883.1"/>
    <property type="molecule type" value="Genomic_DNA"/>
</dbReference>
<dbReference type="EMBL" id="AY289051">
    <property type="protein sequence ID" value="AAP47880.1"/>
    <property type="molecule type" value="Genomic_DNA"/>
</dbReference>
<dbReference type="EMBL" id="AY289052">
    <property type="protein sequence ID" value="AAP47893.1"/>
    <property type="molecule type" value="Genomic_DNA"/>
</dbReference>
<dbReference type="EMBL" id="AY289053">
    <property type="protein sequence ID" value="AAP47906.1"/>
    <property type="molecule type" value="Genomic_DNA"/>
</dbReference>
<dbReference type="EMBL" id="AY289054">
    <property type="protein sequence ID" value="AAP47919.1"/>
    <property type="molecule type" value="Genomic_DNA"/>
</dbReference>
<dbReference type="EMBL" id="AY289055">
    <property type="protein sequence ID" value="AAP47932.1"/>
    <property type="molecule type" value="Genomic_DNA"/>
</dbReference>
<dbReference type="EMBL" id="AY289056">
    <property type="protein sequence ID" value="AAP47945.1"/>
    <property type="molecule type" value="Genomic_DNA"/>
</dbReference>
<dbReference type="EMBL" id="AY289057">
    <property type="protein sequence ID" value="AAP47958.1"/>
    <property type="molecule type" value="Genomic_DNA"/>
</dbReference>
<dbReference type="EMBL" id="AY289058">
    <property type="protein sequence ID" value="AAP47971.1"/>
    <property type="molecule type" value="Genomic_DNA"/>
</dbReference>
<dbReference type="EMBL" id="AY289059">
    <property type="protein sequence ID" value="AAP47984.1"/>
    <property type="molecule type" value="Genomic_DNA"/>
</dbReference>
<dbReference type="EMBL" id="AY289063">
    <property type="protein sequence ID" value="AAP48036.1"/>
    <property type="molecule type" value="Genomic_DNA"/>
</dbReference>
<dbReference type="EMBL" id="AY289064">
    <property type="protein sequence ID" value="AAP48049.1"/>
    <property type="molecule type" value="Genomic_DNA"/>
</dbReference>
<dbReference type="EMBL" id="AY289065">
    <property type="protein sequence ID" value="AAP48062.1"/>
    <property type="molecule type" value="Genomic_DNA"/>
</dbReference>
<dbReference type="EMBL" id="AY289066">
    <property type="protein sequence ID" value="AAP48075.1"/>
    <property type="molecule type" value="Genomic_DNA"/>
</dbReference>
<dbReference type="EMBL" id="AY289067">
    <property type="protein sequence ID" value="AAP48088.1"/>
    <property type="molecule type" value="Genomic_DNA"/>
</dbReference>
<dbReference type="EMBL" id="AY289068">
    <property type="protein sequence ID" value="AAP48101.1"/>
    <property type="molecule type" value="Genomic_DNA"/>
</dbReference>
<dbReference type="EMBL" id="AY289069">
    <property type="protein sequence ID" value="AAP48114.1"/>
    <property type="molecule type" value="Genomic_DNA"/>
</dbReference>
<dbReference type="EMBL" id="AY289070">
    <property type="protein sequence ID" value="AAP48127.1"/>
    <property type="molecule type" value="Genomic_DNA"/>
</dbReference>
<dbReference type="EMBL" id="AY289071">
    <property type="protein sequence ID" value="AAP48140.1"/>
    <property type="molecule type" value="Genomic_DNA"/>
</dbReference>
<dbReference type="EMBL" id="AY289072">
    <property type="protein sequence ID" value="AAP48153.1"/>
    <property type="molecule type" value="Genomic_DNA"/>
</dbReference>
<dbReference type="EMBL" id="AY289073">
    <property type="protein sequence ID" value="AAP48166.1"/>
    <property type="molecule type" value="Genomic_DNA"/>
</dbReference>
<dbReference type="EMBL" id="AY289074">
    <property type="protein sequence ID" value="AAP48179.1"/>
    <property type="molecule type" value="Genomic_DNA"/>
</dbReference>
<dbReference type="EMBL" id="AY289075">
    <property type="protein sequence ID" value="AAP48192.1"/>
    <property type="molecule type" value="Genomic_DNA"/>
</dbReference>
<dbReference type="EMBL" id="AY289076">
    <property type="protein sequence ID" value="AAP48205.1"/>
    <property type="molecule type" value="Genomic_DNA"/>
</dbReference>
<dbReference type="EMBL" id="AY289077">
    <property type="protein sequence ID" value="AAP48218.1"/>
    <property type="molecule type" value="Genomic_DNA"/>
</dbReference>
<dbReference type="EMBL" id="AY289078">
    <property type="protein sequence ID" value="AAP48231.1"/>
    <property type="molecule type" value="Genomic_DNA"/>
</dbReference>
<dbReference type="EMBL" id="AY289079">
    <property type="protein sequence ID" value="AAP48244.1"/>
    <property type="molecule type" value="Genomic_DNA"/>
</dbReference>
<dbReference type="EMBL" id="AY289080">
    <property type="protein sequence ID" value="AAP48257.1"/>
    <property type="molecule type" value="Genomic_DNA"/>
</dbReference>
<dbReference type="EMBL" id="AY289083">
    <property type="protein sequence ID" value="AAP48296.1"/>
    <property type="molecule type" value="Genomic_DNA"/>
</dbReference>
<dbReference type="EMBL" id="AY289084">
    <property type="protein sequence ID" value="AAP48309.1"/>
    <property type="molecule type" value="Genomic_DNA"/>
</dbReference>
<dbReference type="EMBL" id="AY289085">
    <property type="protein sequence ID" value="AAP48322.1"/>
    <property type="molecule type" value="Genomic_DNA"/>
</dbReference>
<dbReference type="EMBL" id="AY289086">
    <property type="protein sequence ID" value="AAP48335.1"/>
    <property type="molecule type" value="Genomic_DNA"/>
</dbReference>
<dbReference type="EMBL" id="AY289087">
    <property type="protein sequence ID" value="AAP48348.1"/>
    <property type="molecule type" value="Genomic_DNA"/>
</dbReference>
<dbReference type="EMBL" id="AY289088">
    <property type="protein sequence ID" value="AAP48361.1"/>
    <property type="molecule type" value="Genomic_DNA"/>
</dbReference>
<dbReference type="EMBL" id="AY289089">
    <property type="protein sequence ID" value="AAP48374.1"/>
    <property type="molecule type" value="Genomic_DNA"/>
</dbReference>
<dbReference type="EMBL" id="AY289090">
    <property type="protein sequence ID" value="AAP48387.1"/>
    <property type="molecule type" value="Genomic_DNA"/>
</dbReference>
<dbReference type="EMBL" id="AY289091">
    <property type="protein sequence ID" value="AAP48400.1"/>
    <property type="molecule type" value="Genomic_DNA"/>
</dbReference>
<dbReference type="EMBL" id="AY289092">
    <property type="protein sequence ID" value="AAP48413.1"/>
    <property type="molecule type" value="Genomic_DNA"/>
</dbReference>
<dbReference type="EMBL" id="AY289094">
    <property type="protein sequence ID" value="AAP48438.1"/>
    <property type="molecule type" value="Genomic_DNA"/>
</dbReference>
<dbReference type="EMBL" id="AY289095">
    <property type="protein sequence ID" value="AAP48451.1"/>
    <property type="molecule type" value="Genomic_DNA"/>
</dbReference>
<dbReference type="EMBL" id="AY289096">
    <property type="protein sequence ID" value="AAP48464.1"/>
    <property type="molecule type" value="Genomic_DNA"/>
</dbReference>
<dbReference type="EMBL" id="AY289099">
    <property type="protein sequence ID" value="AAP48503.1"/>
    <property type="molecule type" value="Genomic_DNA"/>
</dbReference>
<dbReference type="EMBL" id="AY289100">
    <property type="protein sequence ID" value="AAP48516.1"/>
    <property type="molecule type" value="Genomic_DNA"/>
</dbReference>
<dbReference type="EMBL" id="AY289101">
    <property type="protein sequence ID" value="AAP48529.1"/>
    <property type="molecule type" value="Genomic_DNA"/>
</dbReference>
<dbReference type="EMBL" id="AY289102">
    <property type="protein sequence ID" value="AAP48542.1"/>
    <property type="molecule type" value="Genomic_DNA"/>
</dbReference>
<dbReference type="EMBL" id="AY495090">
    <property type="protein sequence ID" value="AAR92496.1"/>
    <property type="molecule type" value="Genomic_DNA"/>
</dbReference>
<dbReference type="EMBL" id="AY495091">
    <property type="protein sequence ID" value="AAR92509.1"/>
    <property type="molecule type" value="Genomic_DNA"/>
</dbReference>
<dbReference type="EMBL" id="AY495092">
    <property type="protein sequence ID" value="AAR92522.1"/>
    <property type="molecule type" value="Genomic_DNA"/>
</dbReference>
<dbReference type="EMBL" id="AY495093">
    <property type="protein sequence ID" value="AAR92535.1"/>
    <property type="molecule type" value="Genomic_DNA"/>
</dbReference>
<dbReference type="EMBL" id="AY495094">
    <property type="protein sequence ID" value="AAR92548.1"/>
    <property type="molecule type" value="Genomic_DNA"/>
</dbReference>
<dbReference type="EMBL" id="AY495096">
    <property type="protein sequence ID" value="AAR92574.1"/>
    <property type="molecule type" value="Genomic_DNA"/>
</dbReference>
<dbReference type="EMBL" id="AY495097">
    <property type="protein sequence ID" value="AAR92587.1"/>
    <property type="molecule type" value="Genomic_DNA"/>
</dbReference>
<dbReference type="EMBL" id="AY495098">
    <property type="protein sequence ID" value="AAR92600.1"/>
    <property type="molecule type" value="Genomic_DNA"/>
</dbReference>
<dbReference type="EMBL" id="AY495099">
    <property type="protein sequence ID" value="AAR92613.1"/>
    <property type="molecule type" value="Genomic_DNA"/>
</dbReference>
<dbReference type="EMBL" id="AY495100">
    <property type="protein sequence ID" value="AAR92626.1"/>
    <property type="molecule type" value="Genomic_DNA"/>
</dbReference>
<dbReference type="EMBL" id="AY495102">
    <property type="protein sequence ID" value="AAR92652.1"/>
    <property type="molecule type" value="Genomic_DNA"/>
</dbReference>
<dbReference type="EMBL" id="AY495103">
    <property type="protein sequence ID" value="AAR92665.1"/>
    <property type="molecule type" value="Genomic_DNA"/>
</dbReference>
<dbReference type="EMBL" id="AY495104">
    <property type="protein sequence ID" value="AAR92678.1"/>
    <property type="molecule type" value="Genomic_DNA"/>
</dbReference>
<dbReference type="EMBL" id="AY495105">
    <property type="protein sequence ID" value="AAR92691.1"/>
    <property type="molecule type" value="Genomic_DNA"/>
</dbReference>
<dbReference type="EMBL" id="AY495106">
    <property type="protein sequence ID" value="AAR92704.1"/>
    <property type="molecule type" value="Genomic_DNA"/>
</dbReference>
<dbReference type="EMBL" id="AY495107">
    <property type="protein sequence ID" value="AAR92717.1"/>
    <property type="molecule type" value="Genomic_DNA"/>
</dbReference>
<dbReference type="EMBL" id="AY495108">
    <property type="protein sequence ID" value="AAR92730.1"/>
    <property type="molecule type" value="Genomic_DNA"/>
</dbReference>
<dbReference type="EMBL" id="AY495109">
    <property type="protein sequence ID" value="AAR92743.1"/>
    <property type="molecule type" value="Genomic_DNA"/>
</dbReference>
<dbReference type="EMBL" id="AY495110">
    <property type="protein sequence ID" value="AAR92756.1"/>
    <property type="molecule type" value="Genomic_DNA"/>
</dbReference>
<dbReference type="EMBL" id="AY495112">
    <property type="protein sequence ID" value="AAR92782.1"/>
    <property type="molecule type" value="Genomic_DNA"/>
</dbReference>
<dbReference type="EMBL" id="AY495113">
    <property type="protein sequence ID" value="AAR92795.1"/>
    <property type="molecule type" value="Genomic_DNA"/>
</dbReference>
<dbReference type="EMBL" id="AY495114">
    <property type="protein sequence ID" value="AAR92808.1"/>
    <property type="molecule type" value="Genomic_DNA"/>
</dbReference>
<dbReference type="EMBL" id="AY495115">
    <property type="protein sequence ID" value="AAR92821.1"/>
    <property type="molecule type" value="Genomic_DNA"/>
</dbReference>
<dbReference type="EMBL" id="AY495117">
    <property type="protein sequence ID" value="AAR92847.1"/>
    <property type="molecule type" value="Genomic_DNA"/>
</dbReference>
<dbReference type="EMBL" id="AY495118">
    <property type="protein sequence ID" value="AAR92860.1"/>
    <property type="molecule type" value="Genomic_DNA"/>
</dbReference>
<dbReference type="EMBL" id="AY495119">
    <property type="protein sequence ID" value="AAR92873.1"/>
    <property type="molecule type" value="Genomic_DNA"/>
</dbReference>
<dbReference type="EMBL" id="AY495120">
    <property type="protein sequence ID" value="AAR92886.1"/>
    <property type="molecule type" value="Genomic_DNA"/>
</dbReference>
<dbReference type="EMBL" id="AY495121">
    <property type="protein sequence ID" value="AAR92899.1"/>
    <property type="molecule type" value="Genomic_DNA"/>
</dbReference>
<dbReference type="EMBL" id="AY495122">
    <property type="protein sequence ID" value="AAR92912.1"/>
    <property type="molecule type" value="Genomic_DNA"/>
</dbReference>
<dbReference type="EMBL" id="AY495124">
    <property type="protein sequence ID" value="AAR92938.1"/>
    <property type="molecule type" value="Genomic_DNA"/>
</dbReference>
<dbReference type="EMBL" id="AY495126">
    <property type="protein sequence ID" value="AAR92964.1"/>
    <property type="molecule type" value="Genomic_DNA"/>
</dbReference>
<dbReference type="EMBL" id="AY495127">
    <property type="protein sequence ID" value="AAR92977.1"/>
    <property type="molecule type" value="Genomic_DNA"/>
</dbReference>
<dbReference type="EMBL" id="AY495128">
    <property type="protein sequence ID" value="AAR92990.1"/>
    <property type="molecule type" value="Genomic_DNA"/>
</dbReference>
<dbReference type="EMBL" id="AY495129">
    <property type="protein sequence ID" value="AAR93003.1"/>
    <property type="molecule type" value="Genomic_DNA"/>
</dbReference>
<dbReference type="EMBL" id="AY495130">
    <property type="protein sequence ID" value="AAR93016.1"/>
    <property type="molecule type" value="Genomic_DNA"/>
</dbReference>
<dbReference type="EMBL" id="AY495132">
    <property type="protein sequence ID" value="AAR93042.1"/>
    <property type="molecule type" value="Genomic_DNA"/>
</dbReference>
<dbReference type="EMBL" id="AY495133">
    <property type="protein sequence ID" value="AAR93055.1"/>
    <property type="molecule type" value="Genomic_DNA"/>
</dbReference>
<dbReference type="EMBL" id="AY495135">
    <property type="protein sequence ID" value="AAR93081.1"/>
    <property type="molecule type" value="Genomic_DNA"/>
</dbReference>
<dbReference type="EMBL" id="AY495136">
    <property type="protein sequence ID" value="AAR93094.1"/>
    <property type="molecule type" value="Genomic_DNA"/>
</dbReference>
<dbReference type="EMBL" id="AY495137">
    <property type="protein sequence ID" value="AAR93107.1"/>
    <property type="molecule type" value="Genomic_DNA"/>
</dbReference>
<dbReference type="EMBL" id="AY495138">
    <property type="protein sequence ID" value="AAR93120.1"/>
    <property type="molecule type" value="Genomic_DNA"/>
</dbReference>
<dbReference type="EMBL" id="AY495139">
    <property type="protein sequence ID" value="AAR93133.1"/>
    <property type="molecule type" value="Genomic_DNA"/>
</dbReference>
<dbReference type="EMBL" id="AY495140">
    <property type="protein sequence ID" value="AAR93146.1"/>
    <property type="molecule type" value="Genomic_DNA"/>
</dbReference>
<dbReference type="EMBL" id="AY495141">
    <property type="protein sequence ID" value="AAR93159.1"/>
    <property type="molecule type" value="Genomic_DNA"/>
</dbReference>
<dbReference type="EMBL" id="AY495142">
    <property type="protein sequence ID" value="AAR93172.1"/>
    <property type="molecule type" value="Genomic_DNA"/>
</dbReference>
<dbReference type="EMBL" id="AY495143">
    <property type="protein sequence ID" value="AAR93185.1"/>
    <property type="molecule type" value="Genomic_DNA"/>
</dbReference>
<dbReference type="EMBL" id="AY495144">
    <property type="protein sequence ID" value="AAR93198.1"/>
    <property type="molecule type" value="Genomic_DNA"/>
</dbReference>
<dbReference type="EMBL" id="AY495145">
    <property type="protein sequence ID" value="AAR93211.1"/>
    <property type="molecule type" value="Genomic_DNA"/>
</dbReference>
<dbReference type="EMBL" id="AY495146">
    <property type="protein sequence ID" value="AAR93224.1"/>
    <property type="molecule type" value="Genomic_DNA"/>
</dbReference>
<dbReference type="EMBL" id="AY495147">
    <property type="protein sequence ID" value="AAR93237.1"/>
    <property type="molecule type" value="Genomic_DNA"/>
</dbReference>
<dbReference type="EMBL" id="AY495148">
    <property type="protein sequence ID" value="AAR93250.1"/>
    <property type="molecule type" value="Genomic_DNA"/>
</dbReference>
<dbReference type="EMBL" id="AY495149">
    <property type="protein sequence ID" value="AAR93263.1"/>
    <property type="molecule type" value="Genomic_DNA"/>
</dbReference>
<dbReference type="EMBL" id="AY495150">
    <property type="protein sequence ID" value="AAR93276.1"/>
    <property type="molecule type" value="Genomic_DNA"/>
</dbReference>
<dbReference type="EMBL" id="AY495151">
    <property type="protein sequence ID" value="AAR93289.1"/>
    <property type="molecule type" value="Genomic_DNA"/>
</dbReference>
<dbReference type="EMBL" id="AY495152">
    <property type="protein sequence ID" value="AAR93302.1"/>
    <property type="molecule type" value="Genomic_DNA"/>
</dbReference>
<dbReference type="EMBL" id="AY495153">
    <property type="protein sequence ID" value="AAR93315.1"/>
    <property type="molecule type" value="Genomic_DNA"/>
</dbReference>
<dbReference type="EMBL" id="AY495154">
    <property type="protein sequence ID" value="AAR93328.1"/>
    <property type="molecule type" value="Genomic_DNA"/>
</dbReference>
<dbReference type="EMBL" id="AY495155">
    <property type="protein sequence ID" value="AAR93341.1"/>
    <property type="molecule type" value="Genomic_DNA"/>
</dbReference>
<dbReference type="EMBL" id="AY495156">
    <property type="protein sequence ID" value="AAR93354.1"/>
    <property type="molecule type" value="Genomic_DNA"/>
</dbReference>
<dbReference type="EMBL" id="AY495157">
    <property type="protein sequence ID" value="AAR93367.1"/>
    <property type="molecule type" value="Genomic_DNA"/>
</dbReference>
<dbReference type="EMBL" id="AY495158">
    <property type="protein sequence ID" value="AAR93380.1"/>
    <property type="molecule type" value="Genomic_DNA"/>
</dbReference>
<dbReference type="EMBL" id="AY495159">
    <property type="protein sequence ID" value="AAR93393.1"/>
    <property type="molecule type" value="Genomic_DNA"/>
</dbReference>
<dbReference type="EMBL" id="AY495160">
    <property type="protein sequence ID" value="AAR93406.1"/>
    <property type="molecule type" value="Genomic_DNA"/>
</dbReference>
<dbReference type="EMBL" id="AY495161">
    <property type="protein sequence ID" value="AAR93419.1"/>
    <property type="molecule type" value="Genomic_DNA"/>
</dbReference>
<dbReference type="EMBL" id="AY495162">
    <property type="protein sequence ID" value="AAR93432.1"/>
    <property type="molecule type" value="Genomic_DNA"/>
</dbReference>
<dbReference type="EMBL" id="AY495163">
    <property type="protein sequence ID" value="AAR93445.1"/>
    <property type="molecule type" value="Genomic_DNA"/>
</dbReference>
<dbReference type="EMBL" id="AY495164">
    <property type="protein sequence ID" value="AAR93458.1"/>
    <property type="molecule type" value="Genomic_DNA"/>
</dbReference>
<dbReference type="EMBL" id="AY495165">
    <property type="protein sequence ID" value="AAR93471.1"/>
    <property type="molecule type" value="Genomic_DNA"/>
</dbReference>
<dbReference type="EMBL" id="AY495166">
    <property type="protein sequence ID" value="AAR93484.1"/>
    <property type="molecule type" value="Genomic_DNA"/>
</dbReference>
<dbReference type="EMBL" id="AY495167">
    <property type="protein sequence ID" value="AAR93497.1"/>
    <property type="molecule type" value="Genomic_DNA"/>
</dbReference>
<dbReference type="EMBL" id="AY495168">
    <property type="protein sequence ID" value="AAR93510.1"/>
    <property type="molecule type" value="Genomic_DNA"/>
</dbReference>
<dbReference type="EMBL" id="AY495169">
    <property type="protein sequence ID" value="AAR93523.1"/>
    <property type="molecule type" value="Genomic_DNA"/>
</dbReference>
<dbReference type="EMBL" id="AY495170">
    <property type="protein sequence ID" value="AAR93536.1"/>
    <property type="molecule type" value="Genomic_DNA"/>
</dbReference>
<dbReference type="EMBL" id="AY495171">
    <property type="protein sequence ID" value="AAR93549.1"/>
    <property type="molecule type" value="Genomic_DNA"/>
</dbReference>
<dbReference type="EMBL" id="AY495172">
    <property type="protein sequence ID" value="AAR93562.1"/>
    <property type="molecule type" value="Genomic_DNA"/>
</dbReference>
<dbReference type="EMBL" id="AY495173">
    <property type="protein sequence ID" value="AAR93575.1"/>
    <property type="molecule type" value="Genomic_DNA"/>
</dbReference>
<dbReference type="EMBL" id="AY495174">
    <property type="protein sequence ID" value="AAR93588.1"/>
    <property type="molecule type" value="Genomic_DNA"/>
</dbReference>
<dbReference type="EMBL" id="AY495175">
    <property type="protein sequence ID" value="AAR93601.1"/>
    <property type="molecule type" value="Genomic_DNA"/>
</dbReference>
<dbReference type="EMBL" id="AY495176">
    <property type="protein sequence ID" value="AAR93614.1"/>
    <property type="molecule type" value="Genomic_DNA"/>
</dbReference>
<dbReference type="EMBL" id="AY495177">
    <property type="protein sequence ID" value="AAR93627.1"/>
    <property type="molecule type" value="Genomic_DNA"/>
</dbReference>
<dbReference type="EMBL" id="AY495180">
    <property type="protein sequence ID" value="AAR93666.1"/>
    <property type="molecule type" value="Genomic_DNA"/>
</dbReference>
<dbReference type="EMBL" id="AY495185">
    <property type="protein sequence ID" value="AAR93731.1"/>
    <property type="molecule type" value="Genomic_DNA"/>
</dbReference>
<dbReference type="EMBL" id="AY495187">
    <property type="protein sequence ID" value="AAR93757.1"/>
    <property type="molecule type" value="Genomic_DNA"/>
</dbReference>
<dbReference type="EMBL" id="AY495188">
    <property type="protein sequence ID" value="AAR93770.1"/>
    <property type="molecule type" value="Genomic_DNA"/>
</dbReference>
<dbReference type="EMBL" id="AY495189">
    <property type="protein sequence ID" value="AAR93783.1"/>
    <property type="molecule type" value="Genomic_DNA"/>
</dbReference>
<dbReference type="EMBL" id="AY495190">
    <property type="protein sequence ID" value="AAR93796.1"/>
    <property type="molecule type" value="Genomic_DNA"/>
</dbReference>
<dbReference type="EMBL" id="AY495191">
    <property type="protein sequence ID" value="AAR93809.1"/>
    <property type="molecule type" value="Genomic_DNA"/>
</dbReference>
<dbReference type="EMBL" id="AY495192">
    <property type="protein sequence ID" value="AAR93822.1"/>
    <property type="molecule type" value="Genomic_DNA"/>
</dbReference>
<dbReference type="EMBL" id="AY495193">
    <property type="protein sequence ID" value="AAR93835.1"/>
    <property type="molecule type" value="Genomic_DNA"/>
</dbReference>
<dbReference type="EMBL" id="AY495194">
    <property type="protein sequence ID" value="AAR93848.1"/>
    <property type="molecule type" value="Genomic_DNA"/>
</dbReference>
<dbReference type="EMBL" id="AY495239">
    <property type="protein sequence ID" value="AAR94433.1"/>
    <property type="molecule type" value="Genomic_DNA"/>
</dbReference>
<dbReference type="EMBL" id="AY495240">
    <property type="protein sequence ID" value="AAR94446.1"/>
    <property type="molecule type" value="Genomic_DNA"/>
</dbReference>
<dbReference type="EMBL" id="AY495241">
    <property type="protein sequence ID" value="AAR94459.1"/>
    <property type="molecule type" value="Genomic_DNA"/>
</dbReference>
<dbReference type="EMBL" id="AY495242">
    <property type="protein sequence ID" value="AAR94472.1"/>
    <property type="molecule type" value="Genomic_DNA"/>
</dbReference>
<dbReference type="EMBL" id="AY495243">
    <property type="protein sequence ID" value="AAR94485.1"/>
    <property type="molecule type" value="Genomic_DNA"/>
</dbReference>
<dbReference type="EMBL" id="AY495244">
    <property type="protein sequence ID" value="AAR94498.1"/>
    <property type="molecule type" value="Genomic_DNA"/>
</dbReference>
<dbReference type="EMBL" id="AY495245">
    <property type="protein sequence ID" value="AAR94511.1"/>
    <property type="molecule type" value="Genomic_DNA"/>
</dbReference>
<dbReference type="EMBL" id="AY495246">
    <property type="protein sequence ID" value="AAR94524.1"/>
    <property type="molecule type" value="Genomic_DNA"/>
</dbReference>
<dbReference type="EMBL" id="AY495247">
    <property type="protein sequence ID" value="AAR94537.1"/>
    <property type="molecule type" value="Genomic_DNA"/>
</dbReference>
<dbReference type="EMBL" id="AY495248">
    <property type="protein sequence ID" value="AAR94550.1"/>
    <property type="molecule type" value="Genomic_DNA"/>
</dbReference>
<dbReference type="EMBL" id="AY495249">
    <property type="protein sequence ID" value="AAR94563.1"/>
    <property type="molecule type" value="Genomic_DNA"/>
</dbReference>
<dbReference type="EMBL" id="AY495250">
    <property type="protein sequence ID" value="AAR94576.1"/>
    <property type="molecule type" value="Genomic_DNA"/>
</dbReference>
<dbReference type="EMBL" id="AY495251">
    <property type="protein sequence ID" value="AAR94589.1"/>
    <property type="molecule type" value="Genomic_DNA"/>
</dbReference>
<dbReference type="EMBL" id="AY495252">
    <property type="protein sequence ID" value="AAR94602.1"/>
    <property type="molecule type" value="Genomic_DNA"/>
</dbReference>
<dbReference type="EMBL" id="AY495253">
    <property type="protein sequence ID" value="AAR94615.1"/>
    <property type="molecule type" value="Genomic_DNA"/>
</dbReference>
<dbReference type="EMBL" id="AY495254">
    <property type="protein sequence ID" value="AAR94628.1"/>
    <property type="molecule type" value="Genomic_DNA"/>
</dbReference>
<dbReference type="EMBL" id="AY495255">
    <property type="protein sequence ID" value="AAR94641.1"/>
    <property type="molecule type" value="Genomic_DNA"/>
</dbReference>
<dbReference type="EMBL" id="AY495257">
    <property type="protein sequence ID" value="AAR94667.1"/>
    <property type="molecule type" value="Genomic_DNA"/>
</dbReference>
<dbReference type="EMBL" id="AY495258">
    <property type="protein sequence ID" value="AAR94680.1"/>
    <property type="molecule type" value="Genomic_DNA"/>
</dbReference>
<dbReference type="EMBL" id="AY495259">
    <property type="protein sequence ID" value="AAR94693.1"/>
    <property type="molecule type" value="Genomic_DNA"/>
</dbReference>
<dbReference type="EMBL" id="AY495260">
    <property type="protein sequence ID" value="AAR94706.1"/>
    <property type="molecule type" value="Genomic_DNA"/>
</dbReference>
<dbReference type="EMBL" id="AY495261">
    <property type="protein sequence ID" value="AAR94719.1"/>
    <property type="molecule type" value="Genomic_DNA"/>
</dbReference>
<dbReference type="EMBL" id="AY495262">
    <property type="protein sequence ID" value="AAR94732.1"/>
    <property type="molecule type" value="Genomic_DNA"/>
</dbReference>
<dbReference type="EMBL" id="AY495263">
    <property type="protein sequence ID" value="AAR94745.1"/>
    <property type="molecule type" value="Genomic_DNA"/>
</dbReference>
<dbReference type="EMBL" id="AY495264">
    <property type="protein sequence ID" value="AAR94758.1"/>
    <property type="molecule type" value="Genomic_DNA"/>
</dbReference>
<dbReference type="EMBL" id="AY495265">
    <property type="protein sequence ID" value="AAR94771.1"/>
    <property type="molecule type" value="Genomic_DNA"/>
</dbReference>
<dbReference type="EMBL" id="AY495306">
    <property type="protein sequence ID" value="AAR95304.1"/>
    <property type="molecule type" value="Genomic_DNA"/>
</dbReference>
<dbReference type="EMBL" id="AY495307">
    <property type="protein sequence ID" value="AAR95317.1"/>
    <property type="molecule type" value="Genomic_DNA"/>
</dbReference>
<dbReference type="EMBL" id="AY495308">
    <property type="protein sequence ID" value="AAR95330.1"/>
    <property type="molecule type" value="Genomic_DNA"/>
</dbReference>
<dbReference type="EMBL" id="AY495309">
    <property type="protein sequence ID" value="AAR95343.1"/>
    <property type="molecule type" value="Genomic_DNA"/>
</dbReference>
<dbReference type="EMBL" id="AY495310">
    <property type="protein sequence ID" value="AAR95356.1"/>
    <property type="molecule type" value="Genomic_DNA"/>
</dbReference>
<dbReference type="EMBL" id="AY495311">
    <property type="protein sequence ID" value="AAR95369.1"/>
    <property type="molecule type" value="Genomic_DNA"/>
</dbReference>
<dbReference type="EMBL" id="AY495312">
    <property type="protein sequence ID" value="AAR95382.1"/>
    <property type="molecule type" value="Genomic_DNA"/>
</dbReference>
<dbReference type="EMBL" id="AY495313">
    <property type="protein sequence ID" value="AAR95395.1"/>
    <property type="molecule type" value="Genomic_DNA"/>
</dbReference>
<dbReference type="EMBL" id="AY495314">
    <property type="protein sequence ID" value="AAR95408.1"/>
    <property type="molecule type" value="Genomic_DNA"/>
</dbReference>
<dbReference type="EMBL" id="AY495315">
    <property type="protein sequence ID" value="AAR95421.1"/>
    <property type="molecule type" value="Genomic_DNA"/>
</dbReference>
<dbReference type="EMBL" id="AY495316">
    <property type="protein sequence ID" value="AAR95434.1"/>
    <property type="molecule type" value="Genomic_DNA"/>
</dbReference>
<dbReference type="EMBL" id="AY495317">
    <property type="protein sequence ID" value="AAR95447.1"/>
    <property type="molecule type" value="Genomic_DNA"/>
</dbReference>
<dbReference type="EMBL" id="AY495318">
    <property type="protein sequence ID" value="AAR95460.1"/>
    <property type="molecule type" value="Genomic_DNA"/>
</dbReference>
<dbReference type="EMBL" id="AY495319">
    <property type="protein sequence ID" value="AAR95473.1"/>
    <property type="molecule type" value="Genomic_DNA"/>
</dbReference>
<dbReference type="EMBL" id="AY495320">
    <property type="protein sequence ID" value="AAR95486.1"/>
    <property type="molecule type" value="Genomic_DNA"/>
</dbReference>
<dbReference type="EMBL" id="AY495321">
    <property type="protein sequence ID" value="AAR95499.1"/>
    <property type="molecule type" value="Genomic_DNA"/>
</dbReference>
<dbReference type="EMBL" id="AY495322">
    <property type="protein sequence ID" value="AAR95512.1"/>
    <property type="molecule type" value="Genomic_DNA"/>
</dbReference>
<dbReference type="EMBL" id="AY495323">
    <property type="protein sequence ID" value="AAR95525.1"/>
    <property type="molecule type" value="Genomic_DNA"/>
</dbReference>
<dbReference type="EMBL" id="AY495324">
    <property type="protein sequence ID" value="AAR95538.1"/>
    <property type="molecule type" value="Genomic_DNA"/>
</dbReference>
<dbReference type="EMBL" id="AY495325">
    <property type="protein sequence ID" value="AAR95551.1"/>
    <property type="molecule type" value="Genomic_DNA"/>
</dbReference>
<dbReference type="EMBL" id="AY495326">
    <property type="protein sequence ID" value="AAR95564.1"/>
    <property type="molecule type" value="Genomic_DNA"/>
</dbReference>
<dbReference type="EMBL" id="AY495327">
    <property type="protein sequence ID" value="AAR95577.1"/>
    <property type="molecule type" value="Genomic_DNA"/>
</dbReference>
<dbReference type="EMBL" id="AY495328">
    <property type="protein sequence ID" value="AAR95590.1"/>
    <property type="molecule type" value="Genomic_DNA"/>
</dbReference>
<dbReference type="EMBL" id="AY495329">
    <property type="protein sequence ID" value="AAR95603.1"/>
    <property type="molecule type" value="Genomic_DNA"/>
</dbReference>
<dbReference type="EMBL" id="AY495330">
    <property type="protein sequence ID" value="AAR95616.1"/>
    <property type="molecule type" value="Genomic_DNA"/>
</dbReference>
<dbReference type="EMBL" id="AY495256">
    <property type="protein sequence ID" value="AAR94654.1"/>
    <property type="molecule type" value="Genomic_DNA"/>
</dbReference>
<dbReference type="EMBL" id="FJ236980">
    <property type="protein sequence ID" value="ACI31490.1"/>
    <property type="molecule type" value="Genomic_DNA"/>
</dbReference>
<dbReference type="EMBL" id="M10546">
    <property type="protein sequence ID" value="AAA65501.1"/>
    <property type="molecule type" value="Genomic_DNA"/>
</dbReference>
<dbReference type="PIR" id="A00407">
    <property type="entry name" value="DNHUN1"/>
</dbReference>
<dbReference type="RefSeq" id="YP_003024026.1">
    <property type="nucleotide sequence ID" value="NC_012920.1"/>
</dbReference>
<dbReference type="PDB" id="5XTC">
    <property type="method" value="EM"/>
    <property type="resolution" value="3.70 A"/>
    <property type="chains" value="s=1-318"/>
</dbReference>
<dbReference type="PDB" id="5XTD">
    <property type="method" value="EM"/>
    <property type="resolution" value="3.70 A"/>
    <property type="chains" value="s=1-318"/>
</dbReference>
<dbReference type="PDBsum" id="5XTC"/>
<dbReference type="PDBsum" id="5XTD"/>
<dbReference type="SMR" id="P03886"/>
<dbReference type="BioGRID" id="110631">
    <property type="interactions" value="73"/>
</dbReference>
<dbReference type="ComplexPortal" id="CPX-577">
    <property type="entry name" value="Mitochondrial respiratory chain complex I"/>
</dbReference>
<dbReference type="CORUM" id="P03886"/>
<dbReference type="FunCoup" id="P03886">
    <property type="interactions" value="618"/>
</dbReference>
<dbReference type="IntAct" id="P03886">
    <property type="interactions" value="55"/>
</dbReference>
<dbReference type="MINT" id="P03886"/>
<dbReference type="STRING" id="9606.ENSP00000354687"/>
<dbReference type="BindingDB" id="P03886"/>
<dbReference type="ChEMBL" id="CHEMBL2363065"/>
<dbReference type="DrugBank" id="DB01189">
    <property type="generic name" value="Desflurane"/>
</dbReference>
<dbReference type="DrugBank" id="DB01159">
    <property type="generic name" value="Halothane"/>
</dbReference>
<dbReference type="DrugBank" id="DB00753">
    <property type="generic name" value="Isoflurane"/>
</dbReference>
<dbReference type="DrugBank" id="DB01028">
    <property type="generic name" value="Methoxyflurane"/>
</dbReference>
<dbReference type="DrugBank" id="DB04464">
    <property type="generic name" value="N-Formylmethionine"/>
</dbReference>
<dbReference type="DrugBank" id="DB00157">
    <property type="generic name" value="NADH"/>
</dbReference>
<dbReference type="DrugBank" id="DB12695">
    <property type="generic name" value="Phenethyl Isothiocyanate"/>
</dbReference>
<dbReference type="DrugBank" id="DB01236">
    <property type="generic name" value="Sevoflurane"/>
</dbReference>
<dbReference type="DrugCentral" id="P03886"/>
<dbReference type="GlyGen" id="P03886">
    <property type="glycosylation" value="1 site, 1 O-linked glycan (1 site)"/>
</dbReference>
<dbReference type="SwissPalm" id="P03886"/>
<dbReference type="BioMuta" id="MT-ND1"/>
<dbReference type="DMDM" id="128641"/>
<dbReference type="jPOST" id="P03886"/>
<dbReference type="MassIVE" id="P03886"/>
<dbReference type="PaxDb" id="9606-ENSP00000354687"/>
<dbReference type="PeptideAtlas" id="P03886"/>
<dbReference type="ProteomicsDB" id="51611"/>
<dbReference type="Pumba" id="P03886"/>
<dbReference type="Antibodypedia" id="35355">
    <property type="antibodies" value="236 antibodies from 28 providers"/>
</dbReference>
<dbReference type="DNASU" id="4535"/>
<dbReference type="Ensembl" id="ENST00000361390.2">
    <property type="protein sequence ID" value="ENSP00000354687.2"/>
    <property type="gene ID" value="ENSG00000198888.2"/>
</dbReference>
<dbReference type="GeneID" id="4535"/>
<dbReference type="KEGG" id="hsa:4535"/>
<dbReference type="AGR" id="HGNC:7455"/>
<dbReference type="CTD" id="4535"/>
<dbReference type="DisGeNET" id="4535"/>
<dbReference type="GeneCards" id="MT-ND1"/>
<dbReference type="GeneReviews" id="MT-ND1"/>
<dbReference type="HGNC" id="HGNC:7455">
    <property type="gene designation" value="MT-ND1"/>
</dbReference>
<dbReference type="HPA" id="ENSG00000198888">
    <property type="expression patterns" value="Tissue enhanced (heart)"/>
</dbReference>
<dbReference type="MalaCards" id="MT-ND1"/>
<dbReference type="MIM" id="125853">
    <property type="type" value="phenotype"/>
</dbReference>
<dbReference type="MIM" id="502500">
    <property type="type" value="phenotype"/>
</dbReference>
<dbReference type="MIM" id="516000">
    <property type="type" value="gene"/>
</dbReference>
<dbReference type="MIM" id="535000">
    <property type="type" value="phenotype"/>
</dbReference>
<dbReference type="MIM" id="540000">
    <property type="type" value="phenotype"/>
</dbReference>
<dbReference type="neXtProt" id="NX_P03886"/>
<dbReference type="OpenTargets" id="ENSG00000198888"/>
<dbReference type="Orphanet" id="2609">
    <property type="disease" value="Isolated complex I deficiency"/>
</dbReference>
<dbReference type="Orphanet" id="104">
    <property type="disease" value="Leber hereditary optic neuropathy"/>
</dbReference>
<dbReference type="Orphanet" id="550">
    <property type="disease" value="MELAS"/>
</dbReference>
<dbReference type="Orphanet" id="255210">
    <property type="disease" value="Mitochondrial DNA-associated Leigh syndrome"/>
</dbReference>
<dbReference type="PharmGKB" id="PA31259"/>
<dbReference type="VEuPathDB" id="HostDB:ENSG00000198888"/>
<dbReference type="eggNOG" id="KOG4770">
    <property type="taxonomic scope" value="Eukaryota"/>
</dbReference>
<dbReference type="GeneTree" id="ENSGT00390000006621"/>
<dbReference type="HOGENOM" id="CLU_015134_0_1_1"/>
<dbReference type="InParanoid" id="P03886"/>
<dbReference type="OMA" id="WSGWASN"/>
<dbReference type="PAN-GO" id="P03886">
    <property type="GO annotations" value="3 GO annotations based on evolutionary models"/>
</dbReference>
<dbReference type="PhylomeDB" id="P03886"/>
<dbReference type="TreeFam" id="TF352957"/>
<dbReference type="BioCyc" id="MetaCyc:HS00030-MONOMER"/>
<dbReference type="PathwayCommons" id="P03886"/>
<dbReference type="Reactome" id="R-HSA-611105">
    <property type="pathway name" value="Respiratory electron transport"/>
</dbReference>
<dbReference type="Reactome" id="R-HSA-6799198">
    <property type="pathway name" value="Complex I biogenesis"/>
</dbReference>
<dbReference type="Reactome" id="R-HSA-9837999">
    <property type="pathway name" value="Mitochondrial protein degradation"/>
</dbReference>
<dbReference type="SignaLink" id="P03886"/>
<dbReference type="SIGNOR" id="P03886"/>
<dbReference type="BioGRID-ORCS" id="4535">
    <property type="hits" value="0 hits in 3 CRISPR screens"/>
</dbReference>
<dbReference type="ChiTaRS" id="ND1">
    <property type="organism name" value="human"/>
</dbReference>
<dbReference type="GeneWiki" id="MT-ND1"/>
<dbReference type="GenomeRNAi" id="4535"/>
<dbReference type="Pharos" id="P03886">
    <property type="development level" value="Tclin"/>
</dbReference>
<dbReference type="PRO" id="PR:P03886"/>
<dbReference type="Proteomes" id="UP000005640">
    <property type="component" value="Mitochondrion MT"/>
</dbReference>
<dbReference type="RNAct" id="P03886">
    <property type="molecule type" value="protein"/>
</dbReference>
<dbReference type="Bgee" id="ENSG00000198888">
    <property type="expression patterns" value="Expressed in subcutaneous adipose tissue and 96 other cell types or tissues"/>
</dbReference>
<dbReference type="ExpressionAtlas" id="P03886">
    <property type="expression patterns" value="baseline and differential"/>
</dbReference>
<dbReference type="GO" id="GO:0030425">
    <property type="term" value="C:dendrite"/>
    <property type="evidence" value="ECO:0007669"/>
    <property type="project" value="Ensembl"/>
</dbReference>
<dbReference type="GO" id="GO:0005743">
    <property type="term" value="C:mitochondrial inner membrane"/>
    <property type="evidence" value="ECO:0000314"/>
    <property type="project" value="ComplexPortal"/>
</dbReference>
<dbReference type="GO" id="GO:0031966">
    <property type="term" value="C:mitochondrial membrane"/>
    <property type="evidence" value="ECO:0000314"/>
    <property type="project" value="UniProtKB"/>
</dbReference>
<dbReference type="GO" id="GO:0005739">
    <property type="term" value="C:mitochondrion"/>
    <property type="evidence" value="ECO:0006056"/>
    <property type="project" value="FlyBase"/>
</dbReference>
<dbReference type="GO" id="GO:0043025">
    <property type="term" value="C:neuronal cell body"/>
    <property type="evidence" value="ECO:0007669"/>
    <property type="project" value="Ensembl"/>
</dbReference>
<dbReference type="GO" id="GO:0045271">
    <property type="term" value="C:respiratory chain complex I"/>
    <property type="evidence" value="ECO:0000314"/>
    <property type="project" value="UniProtKB"/>
</dbReference>
<dbReference type="GO" id="GO:0008137">
    <property type="term" value="F:NADH dehydrogenase (ubiquinone) activity"/>
    <property type="evidence" value="ECO:0000315"/>
    <property type="project" value="UniProtKB"/>
</dbReference>
<dbReference type="GO" id="GO:0009060">
    <property type="term" value="P:aerobic respiration"/>
    <property type="evidence" value="ECO:0000318"/>
    <property type="project" value="GO_Central"/>
</dbReference>
<dbReference type="GO" id="GO:0006120">
    <property type="term" value="P:mitochondrial electron transport, NADH to ubiquinone"/>
    <property type="evidence" value="ECO:0000315"/>
    <property type="project" value="UniProtKB"/>
</dbReference>
<dbReference type="GO" id="GO:0032981">
    <property type="term" value="P:mitochondrial respiratory chain complex I assembly"/>
    <property type="evidence" value="ECO:0000315"/>
    <property type="project" value="UniProtKB"/>
</dbReference>
<dbReference type="GO" id="GO:0042776">
    <property type="term" value="P:proton motive force-driven mitochondrial ATP synthesis"/>
    <property type="evidence" value="ECO:0000303"/>
    <property type="project" value="ComplexPortal"/>
</dbReference>
<dbReference type="GO" id="GO:0033194">
    <property type="term" value="P:response to hydroperoxide"/>
    <property type="evidence" value="ECO:0007669"/>
    <property type="project" value="Ensembl"/>
</dbReference>
<dbReference type="GO" id="GO:0001666">
    <property type="term" value="P:response to hypoxia"/>
    <property type="evidence" value="ECO:0007669"/>
    <property type="project" value="Ensembl"/>
</dbReference>
<dbReference type="GO" id="GO:0009410">
    <property type="term" value="P:response to xenobiotic stimulus"/>
    <property type="evidence" value="ECO:0007669"/>
    <property type="project" value="Ensembl"/>
</dbReference>
<dbReference type="HAMAP" id="MF_01350">
    <property type="entry name" value="NDH1_NuoH"/>
    <property type="match status" value="1"/>
</dbReference>
<dbReference type="InterPro" id="IPR001694">
    <property type="entry name" value="NADH_UbQ_OxRdtase_su1/FPO"/>
</dbReference>
<dbReference type="InterPro" id="IPR018086">
    <property type="entry name" value="NADH_UbQ_OxRdtase_su1_CS"/>
</dbReference>
<dbReference type="PANTHER" id="PTHR11432">
    <property type="entry name" value="NADH DEHYDROGENASE SUBUNIT 1"/>
    <property type="match status" value="1"/>
</dbReference>
<dbReference type="PANTHER" id="PTHR11432:SF3">
    <property type="entry name" value="NADH-UBIQUINONE OXIDOREDUCTASE CHAIN 1"/>
    <property type="match status" value="1"/>
</dbReference>
<dbReference type="Pfam" id="PF00146">
    <property type="entry name" value="NADHdh"/>
    <property type="match status" value="1"/>
</dbReference>
<dbReference type="PROSITE" id="PS00667">
    <property type="entry name" value="COMPLEX1_ND1_1"/>
    <property type="match status" value="1"/>
</dbReference>
<dbReference type="PROSITE" id="PS00668">
    <property type="entry name" value="COMPLEX1_ND1_2"/>
    <property type="match status" value="1"/>
</dbReference>
<feature type="chain" id="PRO_0000117414" description="NADH-ubiquinone oxidoreductase chain 1">
    <location>
        <begin position="1"/>
        <end position="318"/>
    </location>
</feature>
<feature type="transmembrane region" description="Helical" evidence="2">
    <location>
        <begin position="2"/>
        <end position="22"/>
    </location>
</feature>
<feature type="transmembrane region" description="Helical" evidence="2">
    <location>
        <begin position="68"/>
        <end position="88"/>
    </location>
</feature>
<feature type="transmembrane region" description="Helical" evidence="2">
    <location>
        <begin position="100"/>
        <end position="120"/>
    </location>
</feature>
<feature type="transmembrane region" description="Helical" evidence="2">
    <location>
        <begin position="146"/>
        <end position="166"/>
    </location>
</feature>
<feature type="transmembrane region" description="Helical" evidence="2">
    <location>
        <begin position="171"/>
        <end position="191"/>
    </location>
</feature>
<feature type="transmembrane region" description="Helical" evidence="2">
    <location>
        <begin position="231"/>
        <end position="251"/>
    </location>
</feature>
<feature type="transmembrane region" description="Helical" evidence="2">
    <location>
        <begin position="253"/>
        <end position="273"/>
    </location>
</feature>
<feature type="transmembrane region" description="Helical" evidence="2">
    <location>
        <begin position="294"/>
        <end position="314"/>
    </location>
</feature>
<feature type="sequence variant" id="VAR_004747" description="Might contribute to non-insulin dependent diabetes mellitus susceptibility in some populations; dbSNP:rs2853516." evidence="16">
    <original>A</original>
    <variation>T</variation>
    <location>
        <position position="4"/>
    </location>
</feature>
<feature type="sequence variant" id="VAR_065195" description="In a patient with hypertrophic cardiomyopathy and profound hearing loss; dbSNP:rs1556422722." evidence="12">
    <original>Y</original>
    <variation>C</variation>
    <location>
        <position position="30"/>
    </location>
</feature>
<feature type="sequence variant" id="VAR_004748" description="In LHON; uncertain significance; secondary mutation; dbSNP:rs41460449." evidence="4">
    <original>Y</original>
    <variation>H</variation>
    <location>
        <position position="30"/>
    </location>
</feature>
<feature type="sequence variant" id="VAR_004749" description="In MELAS; dbSNP:rs201212638." evidence="18">
    <original>M</original>
    <variation>T</variation>
    <location>
        <position position="31"/>
    </location>
</feature>
<feature type="sequence variant" id="VAR_004750" description="In AD-MT; may be associated with disease susceptibility; dbSNP:rs199476120." evidence="17">
    <original>M</original>
    <variation>V</variation>
    <location>
        <position position="31"/>
    </location>
</feature>
<feature type="sequence variant" id="VAR_004751" description="In LHON; primary mutation; medium severity; some vision recovery; 80% reduction in rotenone-sensitive and ubiquinone-dependent electron transfer activity, whereas the proximal NADH dehydrogenase activity of the complex is unaffected; dbSNP:rs199476118." evidence="6 9 10">
    <original>A</original>
    <variation>T</variation>
    <location>
        <position position="52"/>
    </location>
</feature>
<feature type="sequence variant" id="VAR_011346" description="In dbSNP:rs2854133." evidence="15">
    <original>T</original>
    <variation>A</variation>
    <location>
        <position position="87"/>
    </location>
</feature>
<feature type="sequence variant" id="VAR_011347" description="In dbSNP:rs2854135." evidence="15">
    <original>T</original>
    <variation>A</variation>
    <location>
        <position position="168"/>
    </location>
</feature>
<feature type="sequence variant" id="VAR_008587" evidence="7">
    <original>S</original>
    <variation>P</variation>
    <location>
        <position position="205"/>
    </location>
</feature>
<feature type="sequence variant" id="VAR_073352" description="Found in a patient with epileptic encephalopathy evolving to Lennox-Gastaut syndrome; uncertain significance; dbSNP:rs199476123." evidence="13">
    <original>E</original>
    <variation>K</variation>
    <location>
        <position position="214"/>
    </location>
</feature>
<feature type="sequence variant" id="VAR_008588" evidence="7">
    <original>Y</original>
    <variation>C</variation>
    <location>
        <position position="255"/>
    </location>
</feature>
<feature type="sequence variant" id="VAR_004752" description="In dbSNP:rs199476121." evidence="11">
    <original>Y</original>
    <variation>C</variation>
    <location>
        <position position="277"/>
    </location>
</feature>
<feature type="sequence variant" id="VAR_004753" description="In LHON; uncertain significance; secondary mutation; dbSNP:rs199476119." evidence="11">
    <original>L</original>
    <variation>P</variation>
    <location>
        <position position="285"/>
    </location>
</feature>
<feature type="sequence variant" id="VAR_008589" evidence="7">
    <original>L</original>
    <variation>P</variation>
    <location>
        <position position="288"/>
    </location>
</feature>
<feature type="sequence variant" id="VAR_004754" description="In LHON; uncertain significance; secondary mutation; dbSNP:rs1599988." evidence="8">
    <original>Y</original>
    <variation>H</variation>
    <location>
        <position position="304"/>
    </location>
</feature>
<feature type="sequence conflict" description="In Ref. 7; ACI31490." evidence="19" ref="7">
    <original>H</original>
    <variation>R</variation>
    <location>
        <position position="287"/>
    </location>
</feature>
<sequence>MPMANLLLLIVPILIAMAFLMLTERKILGYMQLRKGPNVVGPYGLLQPFADAMKLFTKEPLKPATSTITLYITAPTLALTIALLLWTPLPMPNPLVNLNLGLLFILATSSLAVYSILWSGWASNSNYALIGALRAVAQTISYEVTLAIILLSTLLMSGSFNLSTLITTQEHLWLLLPSWPLAMMWFISTLAETNRTPFDLAEGESELVSGFNIEYAAGPFALFFMAEYTNIIMMNTLTTTIFLGTTYDALSPELYTTYFVTKTLLLTSLFLWIRTAYPRFRYDQLMHLLWKNFLPLTLALLMWYVSMPITISSIPPQT</sequence>
<accession>P03886</accession>
<accession>C0JKH6</accession>
<accession>Q37523</accession>
<evidence type="ECO:0000250" key="1">
    <source>
        <dbReference type="UniProtKB" id="P03887"/>
    </source>
</evidence>
<evidence type="ECO:0000255" key="2"/>
<evidence type="ECO:0000269" key="3">
    <source>
    </source>
</evidence>
<evidence type="ECO:0000269" key="4">
    <source>
    </source>
</evidence>
<evidence type="ECO:0000269" key="5">
    <source>
    </source>
</evidence>
<evidence type="ECO:0000269" key="6">
    <source>
    </source>
</evidence>
<evidence type="ECO:0000269" key="7">
    <source>
    </source>
</evidence>
<evidence type="ECO:0000269" key="8">
    <source>
    </source>
</evidence>
<evidence type="ECO:0000269" key="9">
    <source>
    </source>
</evidence>
<evidence type="ECO:0000269" key="10">
    <source>
    </source>
</evidence>
<evidence type="ECO:0000269" key="11">
    <source>
    </source>
</evidence>
<evidence type="ECO:0000269" key="12">
    <source>
    </source>
</evidence>
<evidence type="ECO:0000269" key="13">
    <source>
    </source>
</evidence>
<evidence type="ECO:0000269" key="14">
    <source>
    </source>
</evidence>
<evidence type="ECO:0000269" key="15">
    <source>
    </source>
</evidence>
<evidence type="ECO:0000269" key="16">
    <source>
    </source>
</evidence>
<evidence type="ECO:0000269" key="17">
    <source>
    </source>
</evidence>
<evidence type="ECO:0000269" key="18">
    <source>
    </source>
</evidence>
<evidence type="ECO:0000305" key="19"/>
<keyword id="KW-0002">3D-structure</keyword>
<keyword id="KW-0026">Alzheimer disease</keyword>
<keyword id="KW-1008">Amyloidosis</keyword>
<keyword id="KW-0219">Diabetes mellitus</keyword>
<keyword id="KW-0225">Disease variant</keyword>
<keyword id="KW-0249">Electron transport</keyword>
<keyword id="KW-0887">Epilepsy</keyword>
<keyword id="KW-0429">Leber hereditary optic neuropathy</keyword>
<keyword id="KW-0867">MELAS syndrome</keyword>
<keyword id="KW-0472">Membrane</keyword>
<keyword id="KW-0496">Mitochondrion</keyword>
<keyword id="KW-0999">Mitochondrion inner membrane</keyword>
<keyword id="KW-0520">NAD</keyword>
<keyword id="KW-0523">Neurodegeneration</keyword>
<keyword id="KW-1274">Primary mitochondrial disease</keyword>
<keyword id="KW-1267">Proteomics identification</keyword>
<keyword id="KW-1185">Reference proteome</keyword>
<keyword id="KW-0679">Respiratory chain</keyword>
<keyword id="KW-1278">Translocase</keyword>
<keyword id="KW-0812">Transmembrane</keyword>
<keyword id="KW-1133">Transmembrane helix</keyword>
<keyword id="KW-0813">Transport</keyword>
<keyword id="KW-0830">Ubiquinone</keyword>
<comment type="function">
    <text evidence="10 14">Core subunit of the mitochondrial membrane respiratory chain NADH dehydrogenase (Complex I) which catalyzes electron transfer from NADH through the respiratory chain, using ubiquinone as an electron acceptor (PubMed:1959619). Essential for the catalytic activity and assembly of complex I (PubMed:1959619, PubMed:26929434).</text>
</comment>
<comment type="catalytic activity">
    <reaction evidence="10">
        <text>a ubiquinone + NADH + 5 H(+)(in) = a ubiquinol + NAD(+) + 4 H(+)(out)</text>
        <dbReference type="Rhea" id="RHEA:29091"/>
        <dbReference type="Rhea" id="RHEA-COMP:9565"/>
        <dbReference type="Rhea" id="RHEA-COMP:9566"/>
        <dbReference type="ChEBI" id="CHEBI:15378"/>
        <dbReference type="ChEBI" id="CHEBI:16389"/>
        <dbReference type="ChEBI" id="CHEBI:17976"/>
        <dbReference type="ChEBI" id="CHEBI:57540"/>
        <dbReference type="ChEBI" id="CHEBI:57945"/>
        <dbReference type="EC" id="7.1.1.2"/>
    </reaction>
</comment>
<comment type="subunit">
    <text evidence="3">Core subunit of respiratory chain NADH dehydrogenase (Complex I) which is composed of 45 different subunits.</text>
</comment>
<comment type="interaction">
    <interactant intactId="EBI-1246156">
        <id>P03886</id>
    </interactant>
    <interactant intactId="EBI-2829310">
        <id>P43490</id>
        <label>NAMPT</label>
    </interactant>
    <organismsDiffer>false</organismsDiffer>
    <experiments>3</experiments>
</comment>
<comment type="subcellular location">
    <subcellularLocation>
        <location evidence="1">Mitochondrion inner membrane</location>
        <topology evidence="2">Multi-pass membrane protein</topology>
    </subcellularLocation>
</comment>
<comment type="disease" evidence="4 6 8 9 10 11">
    <disease id="DI-00640">
        <name>Leber hereditary optic neuropathy</name>
        <acronym>LHON</acronym>
        <description>A maternally inherited form of Leber hereditary optic neuropathy, a mitochondrial disease resulting in bilateral painless loss of central vision due to selective degeneration of the retinal ganglion cells and their axons. The disorder shows incomplete penetrance and male predominance. Cardiac conduction defects and neurological defects have also been described in some LHON patients. LHON results from primary mitochondrial DNA mutations affecting the respiratory chain complexes.</description>
        <dbReference type="MIM" id="535000"/>
    </disease>
    <text>The disease is caused by variants affecting the gene represented in this entry.</text>
</comment>
<comment type="disease" evidence="18">
    <disease id="DI-01983">
        <name>Mitochondrial encephalomyopathy with lactic acidosis and stroke-like episodes syndrome</name>
        <acronym>MELAS</acronym>
        <description>Genetically heterogeneous disorder, characterized by episodic vomiting, seizures, and recurrent cerebral insults resembling strokes and causing hemiparesis, hemianopsia, or cortical blindness.</description>
        <dbReference type="MIM" id="540000"/>
    </disease>
    <text>The disease is caused by variants affecting the gene represented in this entry.</text>
</comment>
<comment type="disease" evidence="17">
    <disease id="DI-02761">
        <name>Alzheimer disease mitochondrial</name>
        <acronym>AD-MT</acronym>
        <description>Alzheimer disease is a neurodegenerative disorder characterized by progressive dementia, loss of cognitive abilities, and deposition of fibrillar amyloid proteins as intraneuronal neurofibrillary tangles, extracellular amyloid plaques and vascular amyloid deposits. The major constituents of these plaques are neurotoxic amyloid-beta protein 40 and amyloid-beta protein 42, that are produced by the proteolysis of the transmembrane APP protein. The cytotoxic C-terminal fragments (CTFs) and the caspase-cleaved products, such as C31, are also implicated in neuronal death.</description>
        <dbReference type="MIM" id="502500"/>
    </disease>
    <text>Disease susceptibility may be associated with variants affecting the gene represented in this entry.</text>
</comment>
<comment type="disease" evidence="5 16">
    <disease id="DI-02060">
        <name>Type 2 diabetes mellitus</name>
        <acronym>T2D</acronym>
        <description>A multifactorial disorder of glucose homeostasis caused by a lack of sensitivity to insulin. Affected individuals usually have an obese body habitus and manifestations of a metabolic syndrome characterized by diabetes, insulin resistance, hypertension and hypertriglyceridemia. The disease results in long-term complications that affect the eyes, kidneys, nerves, and blood vessels.</description>
        <dbReference type="MIM" id="125853"/>
    </disease>
    <text>The gene represented in this entry may be involved in disease pathogenesis.</text>
</comment>
<comment type="similarity">
    <text evidence="19">Belongs to the complex I subunit 1 family.</text>
</comment>
<name>NU1M_HUMAN</name>
<proteinExistence type="evidence at protein level"/>
<organism>
    <name type="scientific">Homo sapiens</name>
    <name type="common">Human</name>
    <dbReference type="NCBI Taxonomy" id="9606"/>
    <lineage>
        <taxon>Eukaryota</taxon>
        <taxon>Metazoa</taxon>
        <taxon>Chordata</taxon>
        <taxon>Craniata</taxon>
        <taxon>Vertebrata</taxon>
        <taxon>Euteleostomi</taxon>
        <taxon>Mammalia</taxon>
        <taxon>Eutheria</taxon>
        <taxon>Euarchontoglires</taxon>
        <taxon>Primates</taxon>
        <taxon>Haplorrhini</taxon>
        <taxon>Catarrhini</taxon>
        <taxon>Hominidae</taxon>
        <taxon>Homo</taxon>
    </lineage>
</organism>
<gene>
    <name type="primary">MT-ND1</name>
    <name type="synonym">MTND1</name>
    <name type="synonym">NADH1</name>
    <name type="synonym">ND1</name>
</gene>
<reference key="1">
    <citation type="journal article" date="1981" name="Nature">
        <title>Sequence and organization of the human mitochondrial genome.</title>
        <authorList>
            <person name="Anderson S."/>
            <person name="Bankier A.T."/>
            <person name="Barrell B.G."/>
            <person name="de Bruijn M.H.L."/>
            <person name="Coulson A.R."/>
            <person name="Drouin J."/>
            <person name="Eperon I.C."/>
            <person name="Nierlich D.P."/>
            <person name="Roe B.A."/>
            <person name="Sanger F."/>
            <person name="Schreier P.H."/>
            <person name="Smith A.J.H."/>
            <person name="Staden R."/>
            <person name="Young I.G."/>
        </authorList>
    </citation>
    <scope>NUCLEOTIDE SEQUENCE [LARGE SCALE GENOMIC DNA]</scope>
</reference>
<reference key="2">
    <citation type="journal article" date="1995" name="Proc. Natl. Acad. Sci. U.S.A.">
        <title>Recent African origin of modern humans revealed by complete sequences of hominoid mitochondrial DNAs.</title>
        <authorList>
            <person name="Horai S."/>
            <person name="Hayasaka K."/>
            <person name="Kondo R."/>
            <person name="Tsugane K."/>
            <person name="Takahata N."/>
        </authorList>
    </citation>
    <scope>NUCLEOTIDE SEQUENCE [GENOMIC DNA]</scope>
    <scope>VARIANTS ALA-87 AND ALA-168</scope>
    <source>
        <tissue>Placenta</tissue>
    </source>
</reference>
<reference key="3">
    <citation type="journal article" date="2003" name="Mol. Biol. Evol.">
        <title>Lineage-specific selection in human mtDNA: lack of polymorphisms in a segment of MTND5 gene in haplogroup J.</title>
        <authorList>
            <person name="Moilanen J.S."/>
            <person name="Finnila S."/>
            <person name="Majamaa K."/>
        </authorList>
    </citation>
    <scope>NUCLEOTIDE SEQUENCE [GENOMIC DNA]</scope>
</reference>
<reference key="4">
    <citation type="journal article" date="2000" name="Nature">
        <title>Mitochondrial genome variation and the origin of modern humans.</title>
        <authorList>
            <person name="Ingman M."/>
            <person name="Kaessmann H."/>
            <person name="Paeaebo S."/>
            <person name="Gyllensten U."/>
        </authorList>
    </citation>
    <scope>NUCLEOTIDE SEQUENCE [GENOMIC DNA]</scope>
</reference>
<reference key="5">
    <citation type="journal article" date="2003" name="Genome Res.">
        <title>Mitochondrial genome variation and evolutionary history of Australian and New Guinean aborigines.</title>
        <authorList>
            <person name="Ingman M."/>
            <person name="Gyllensten U."/>
        </authorList>
    </citation>
    <scope>NUCLEOTIDE SEQUENCE [GENOMIC DNA]</scope>
</reference>
<reference key="6">
    <citation type="journal article" date="2004" name="Int. J. Legal Med.">
        <title>Single nucleotide polymorphisms over the entire mtDNA genome that increase the power of forensic testing in Caucasians.</title>
        <authorList>
            <person name="Coble M.D."/>
            <person name="Just R.S."/>
            <person name="O'Callaghan J.E."/>
            <person name="Letmanyi I.H."/>
            <person name="Peterson C.T."/>
            <person name="Irwin J.A."/>
            <person name="Parsons T.J."/>
        </authorList>
    </citation>
    <scope>NUCLEOTIDE SEQUENCE [GENOMIC DNA]</scope>
</reference>
<reference key="7">
    <citation type="journal article" date="2009" name="BMC Genet.">
        <title>Mitochondrial DNA haplogroup H structure in North Africa.</title>
        <authorList>
            <person name="Ennafaa H."/>
            <person name="Cabrera V.M."/>
            <person name="Abu-Amero K.K."/>
            <person name="Gonzalez A.M."/>
            <person name="Amor M.B."/>
            <person name="Bouhaha R."/>
            <person name="Dzimiri N."/>
            <person name="Elgaaied A.B."/>
            <person name="Larruga J.M."/>
        </authorList>
    </citation>
    <scope>NUCLEOTIDE SEQUENCE [GENOMIC DNA]</scope>
</reference>
<reference key="8">
    <citation type="journal article" date="1980" name="J. Mol. Biol.">
        <title>Cloning in single-stranded bacteriophage as an aid to rapid DNA sequencing.</title>
        <authorList>
            <person name="Sanger F."/>
            <person name="Coulson A.R."/>
            <person name="Barrell B.G."/>
            <person name="Smith A.J.H."/>
            <person name="Roe B.A."/>
        </authorList>
    </citation>
    <scope>NUCLEOTIDE SEQUENCE [GENOMIC DNA] OF 130-318</scope>
</reference>
<reference key="9">
    <citation type="journal article" date="1985" name="Nature">
        <title>Six unidentified reading frames of human mitochondrial DNA encode components of the respiratory-chain NADH dehydrogenase.</title>
        <authorList>
            <person name="Chomyn A."/>
            <person name="Mariottini P."/>
            <person name="Cleeter M.W.J."/>
            <person name="Ragan C.I."/>
            <person name="Matsuno-Yagi A."/>
            <person name="Hatefi Y."/>
            <person name="Doolittle R.F."/>
            <person name="Attardi G."/>
        </authorList>
    </citation>
    <scope>IDENTIFICATION OF PROTEIN</scope>
</reference>
<reference key="10">
    <citation type="journal article" date="2003" name="J. Biol. Chem.">
        <title>The subunit composition of the human NADH dehydrogenase obtained by rapid one-step immunopurification.</title>
        <authorList>
            <person name="Murray J."/>
            <person name="Zhang B."/>
            <person name="Taylor S.W."/>
            <person name="Oglesbee D."/>
            <person name="Fahy E."/>
            <person name="Marusich M.F."/>
            <person name="Ghosh S.S."/>
            <person name="Capaldi R.A."/>
        </authorList>
    </citation>
    <scope>IDENTIFICATION IN THE NADH-UBIQUINONE OXIDOREDUCTASE COMPLEX</scope>
    <scope>IDENTIFICATION BY MASS SPECTROMETRY</scope>
</reference>
<reference key="11">
    <citation type="journal article" date="2004" name="Chin. Med. J.">
        <title>Relationship between mutations of mitochondrial DNA ND1 gene and type 2 diabetes.</title>
        <authorList>
            <person name="Yu P."/>
            <person name="Yu D.M."/>
            <person name="Liu D.M."/>
            <person name="Wang K."/>
            <person name="Tang X.Z."/>
        </authorList>
    </citation>
    <scope>POSSIBLE INVOLVEMENT IN SUSCEPTIBILITY TO T2D</scope>
</reference>
<reference key="12">
    <citation type="journal article" date="2016" name="FASEB J.">
        <title>Loss of mitochondrial DNA-encoded protein ND1 results in disruption of complex I biogenesis during early stages of assembly.</title>
        <authorList>
            <person name="Lim S.C."/>
            <person name="Hroudova J."/>
            <person name="Van Bergen N.J."/>
            <person name="Lopez Sanchez M.I."/>
            <person name="Trounce I.A."/>
            <person name="McKenzie M."/>
        </authorList>
    </citation>
    <scope>FUNCTION</scope>
</reference>
<reference key="13">
    <citation type="journal article" date="2013" name="Hum. Mutat.">
        <title>Whole-exome sequencing identifies a variant of the mitochondrial MT-ND1 gene associated with epileptic encephalopathy: west syndrome evolving to Lennox-Gastaut syndrome.</title>
        <authorList>
            <person name="Delmiro A."/>
            <person name="Rivera H."/>
            <person name="Garcia-Silva M.T."/>
            <person name="Garcia-Consuegra I."/>
            <person name="Martin-Hernandez E."/>
            <person name="Quijada-Fraile P."/>
            <person name="de Las Heras R.S."/>
            <person name="Moreno-Izquierdo A."/>
            <person name="Martin M.A."/>
            <person name="Arenas J."/>
            <person name="Martinez-Azorin F."/>
        </authorList>
    </citation>
    <scope>VARIANT LYS-214</scope>
</reference>
<reference key="14">
    <citation type="journal article" date="2015" name="Proteomics">
        <title>N-terminome analysis of the human mitochondrial proteome.</title>
        <authorList>
            <person name="Vaca Jacome A.S."/>
            <person name="Rabilloud T."/>
            <person name="Schaeffer-Reiss C."/>
            <person name="Rompais M."/>
            <person name="Ayoub D."/>
            <person name="Lane L."/>
            <person name="Bairoch A."/>
            <person name="Van Dorsselaer A."/>
            <person name="Carapito C."/>
        </authorList>
    </citation>
    <scope>IDENTIFICATION BY MASS SPECTROMETRY [LARGE SCALE ANALYSIS]</scope>
</reference>
<reference key="15">
    <citation type="journal article" date="1991" name="Am. J. Hum. Genet.">
        <title>Leber hereditary optic neuropathy: identification of the same mitochondrial ND1 mutation in six pedigrees.</title>
        <authorList>
            <person name="Howell N."/>
            <person name="Bindoff L.A."/>
            <person name="McCullough D.A."/>
            <person name="Kubacka I."/>
            <person name="Poulton J."/>
            <person name="Mackey D."/>
            <person name="Taylor L."/>
            <person name="Turnbull D.M."/>
        </authorList>
    </citation>
    <scope>VARIANT LHON THR-52</scope>
</reference>
<reference key="16">
    <citation type="journal article" date="1991" name="Am. J. Hum. Genet.">
        <title>A new mtDNA mutation associated with Leber hereditary optic neuroretinopathy.</title>
        <authorList>
            <person name="Huoponen K."/>
            <person name="Vilkki J."/>
            <person name="Aula P."/>
            <person name="Nikoskelainen E.K."/>
            <person name="Savontaus M.L."/>
        </authorList>
    </citation>
    <scope>VARIANT LHON THR-52</scope>
</reference>
<reference key="17">
    <citation type="journal article" date="1991" name="Am. J. Hum. Genet.">
        <title>Leber hereditary optic neuropathy: involvement of the mitochondrial ND1 gene and evidence for an intragenic suppressor mutation.</title>
        <authorList>
            <person name="Howell N."/>
            <person name="Kubacka I."/>
            <person name="Xu M."/>
            <person name="McCullough D.A."/>
        </authorList>
    </citation>
    <scope>VARIANT LHON PRO-285</scope>
    <scope>VARIANT CYS-277</scope>
</reference>
<reference key="18">
    <citation type="journal article" date="1991" name="Biochem. Biophys. Res. Commun.">
        <title>Alternative, simultaneous complex I mitochondrial DNA mutations in Leber's hereditary optic neuropathy.</title>
        <authorList>
            <person name="Johns D.R."/>
            <person name="Berman J."/>
        </authorList>
    </citation>
    <scope>VARIANT LHON HIS-304</scope>
</reference>
<reference key="19">
    <citation type="journal article" date="1991" name="FEBS Lett.">
        <title>Electron transfer properties of NADH:ubiquinone reductase in the ND1/3460 and the ND4/11778 mutations of the Leber hereditary optic neuroretinopathy (LHON).</title>
        <authorList>
            <person name="Majander A."/>
            <person name="Huoponen K."/>
            <person name="Savontaus M.-L."/>
            <person name="Nikoskelainen E."/>
            <person name="Wikstroem M."/>
        </authorList>
    </citation>
    <scope>CHARACTERIZATION OF VARIANT LHON THR-52</scope>
    <scope>FUNCTION</scope>
    <scope>CATALYTIC ACTIVITY</scope>
</reference>
<reference key="20">
    <citation type="journal article" date="1991" name="Hum. Genet.">
        <title>Normal variants of human mitochondrial DNA and translation products: the building of a reference data base.</title>
        <authorList>
            <person name="Marzuki S."/>
            <person name="Noer A.S."/>
            <person name="Lertrit P."/>
            <person name="Thyagarajan D."/>
            <person name="Kapsa R."/>
            <person name="Utthanaphol P."/>
            <person name="Byrne E."/>
        </authorList>
    </citation>
    <scope>VARIANTS PRO-205; CYS-255 AND PRO-288</scope>
</reference>
<reference key="21">
    <citation type="journal article" date="1992" name="Biochem. Biophys. Res. Commun.">
        <title>An ND-6 mitochondrial DNA mutation associated with Leber hereditary optic neuropathy.</title>
        <authorList>
            <person name="Johns D.R."/>
            <person name="Neufeld M.J."/>
            <person name="Park R.D."/>
        </authorList>
    </citation>
    <scope>VARIANT LHON HIS-30</scope>
</reference>
<reference key="22">
    <citation type="journal article" date="1993" name="Genomics">
        <title>Mitochondrial DNA variants observed in Alzheimer disease and Parkinson disease patients.</title>
        <authorList>
            <person name="Shoffner J.M."/>
            <person name="Brown M.D."/>
            <person name="Torroni A."/>
            <person name="Lott M.T."/>
            <person name="Cabell M.F."/>
            <person name="Mirra S.S."/>
            <person name="Beal M.F."/>
            <person name="Yang C.-C."/>
            <person name="Gearing M."/>
            <person name="Salvo R."/>
            <person name="Watts R.L."/>
            <person name="Juncos J.L."/>
            <person name="Hansen L.A."/>
            <person name="Crain B.J."/>
            <person name="Fayad M."/>
            <person name="Reckord C.L."/>
            <person name="Wallace D.C."/>
        </authorList>
    </citation>
    <scope>POSSIBLE INVOLVEMENT IN AD-MT</scope>
    <scope>VARIANT AD-MT VAL-31</scope>
</reference>
<reference key="23">
    <citation type="journal article" date="1996" name="Hum. Mutat.">
        <title>A novel combination of mitochondrial tRNA and ND1 gene mutations in a syndrome with MELAS, cardiomyopathy, and diabetes mellitus.</title>
        <authorList>
            <person name="Jaksch M."/>
            <person name="Hofmann S."/>
            <person name="Kaufhold P."/>
            <person name="Obermaier-Kusser B."/>
            <person name="Zierz S."/>
            <person name="Gerbitz K.-D."/>
        </authorList>
    </citation>
    <scope>VARIANT MELAS THR-31</scope>
</reference>
<reference key="24">
    <citation type="journal article" date="1995" name="Biochem. Biophys. Res. Commun.">
        <title>A new mitochondrial DNA mutation associated with non-insulin-dependent diabetes mellitus.</title>
        <authorList>
            <person name="Nakagawa Y."/>
            <person name="Ikegami H."/>
            <person name="Yamato E."/>
            <person name="Takekawa K."/>
            <person name="Fujisawa T."/>
            <person name="Hamada Y."/>
            <person name="Ueda H."/>
            <person name="Uchigata Y."/>
            <person name="Miki T."/>
            <person name="Kumahara Y."/>
        </authorList>
    </citation>
    <scope>VARIANT THR-4</scope>
    <scope>POSSIBLE INVOLVEMENT IN SUSCEPTIBILITY TO T2D</scope>
</reference>
<reference key="25">
    <citation type="journal article" date="2011" name="Biochem. Biophys. Res. Commun.">
        <title>A novel m.3395A&gt;G missense mutation in the mitochondrial ND1 gene associated with the new tRNA(Ile) m.4316A&gt;G mutation in a patient with hypertrophic cardiomyopathy and profound hearing loss.</title>
        <authorList>
            <person name="Chamkha I."/>
            <person name="Mkaouar-Rebai E."/>
            <person name="Aloulou H."/>
            <person name="Chabchoub I."/>
            <person name="Kifagi C."/>
            <person name="Fendri-Kriaa N."/>
            <person name="Kammoun T."/>
            <person name="Hachicha M."/>
            <person name="Fakhfakh F."/>
        </authorList>
    </citation>
    <scope>VARIANT CYS-30</scope>
</reference>
<protein>
    <recommendedName>
        <fullName>NADH-ubiquinone oxidoreductase chain 1</fullName>
        <ecNumber evidence="10">7.1.1.2</ecNumber>
    </recommendedName>
    <alternativeName>
        <fullName>NADH dehydrogenase subunit 1</fullName>
    </alternativeName>
</protein>
<geneLocation type="mitochondrion"/>